<organism>
    <name type="scientific">Homo sapiens</name>
    <name type="common">Human</name>
    <dbReference type="NCBI Taxonomy" id="9606"/>
    <lineage>
        <taxon>Eukaryota</taxon>
        <taxon>Metazoa</taxon>
        <taxon>Chordata</taxon>
        <taxon>Craniata</taxon>
        <taxon>Vertebrata</taxon>
        <taxon>Euteleostomi</taxon>
        <taxon>Mammalia</taxon>
        <taxon>Eutheria</taxon>
        <taxon>Euarchontoglires</taxon>
        <taxon>Primates</taxon>
        <taxon>Haplorrhini</taxon>
        <taxon>Catarrhini</taxon>
        <taxon>Hominidae</taxon>
        <taxon>Homo</taxon>
    </lineage>
</organism>
<name>AAPK2_HUMAN</name>
<dbReference type="EC" id="2.7.11.1" evidence="27 29 33 34"/>
<dbReference type="EC" id="2.7.11.31" evidence="1"/>
<dbReference type="EMBL" id="U06454">
    <property type="protein sequence ID" value="AAA64745.1"/>
    <property type="molecule type" value="mRNA"/>
</dbReference>
<dbReference type="EMBL" id="AL035705">
    <property type="status" value="NOT_ANNOTATED_CDS"/>
    <property type="molecule type" value="Genomic_DNA"/>
</dbReference>
<dbReference type="EMBL" id="BC069680">
    <property type="protein sequence ID" value="AAH69680.1"/>
    <property type="molecule type" value="mRNA"/>
</dbReference>
<dbReference type="EMBL" id="BC069740">
    <property type="protein sequence ID" value="AAH69740.1"/>
    <property type="molecule type" value="mRNA"/>
</dbReference>
<dbReference type="EMBL" id="BC069823">
    <property type="protein sequence ID" value="AAH69823.1"/>
    <property type="molecule type" value="mRNA"/>
</dbReference>
<dbReference type="CCDS" id="CCDS605.1"/>
<dbReference type="PIR" id="S51025">
    <property type="entry name" value="S51025"/>
</dbReference>
<dbReference type="RefSeq" id="NP_006243.2">
    <property type="nucleotide sequence ID" value="NM_006252.3"/>
</dbReference>
<dbReference type="PDB" id="2H6D">
    <property type="method" value="X-ray"/>
    <property type="resolution" value="1.85 A"/>
    <property type="chains" value="A=6-279"/>
</dbReference>
<dbReference type="PDB" id="2LTU">
    <property type="method" value="NMR"/>
    <property type="chains" value="A=282-339"/>
</dbReference>
<dbReference type="PDB" id="2YZA">
    <property type="method" value="X-ray"/>
    <property type="resolution" value="3.02 A"/>
    <property type="chains" value="A=6-279"/>
</dbReference>
<dbReference type="PDB" id="3AQV">
    <property type="method" value="X-ray"/>
    <property type="resolution" value="2.08 A"/>
    <property type="chains" value="A=6-279"/>
</dbReference>
<dbReference type="PDB" id="4CFE">
    <property type="method" value="X-ray"/>
    <property type="resolution" value="3.02 A"/>
    <property type="chains" value="A/C=1-552"/>
</dbReference>
<dbReference type="PDB" id="4CFF">
    <property type="method" value="X-ray"/>
    <property type="resolution" value="3.92 A"/>
    <property type="chains" value="A/C=1-552"/>
</dbReference>
<dbReference type="PDB" id="4ZHX">
    <property type="method" value="X-ray"/>
    <property type="resolution" value="2.99 A"/>
    <property type="chains" value="A/C=2-552"/>
</dbReference>
<dbReference type="PDB" id="5EZV">
    <property type="method" value="X-ray"/>
    <property type="resolution" value="2.99 A"/>
    <property type="chains" value="A/C=2-347, A/C=397-552"/>
</dbReference>
<dbReference type="PDB" id="5ISO">
    <property type="method" value="X-ray"/>
    <property type="resolution" value="2.63 A"/>
    <property type="chains" value="A/C=1-552"/>
</dbReference>
<dbReference type="PDB" id="6B1U">
    <property type="method" value="X-ray"/>
    <property type="resolution" value="2.77 A"/>
    <property type="chains" value="A/C=2-552"/>
</dbReference>
<dbReference type="PDB" id="6B2E">
    <property type="method" value="X-ray"/>
    <property type="resolution" value="3.80 A"/>
    <property type="chains" value="A=2-552"/>
</dbReference>
<dbReference type="PDB" id="6BX6">
    <property type="method" value="X-ray"/>
    <property type="resolution" value="2.90 A"/>
    <property type="chains" value="A=6-279"/>
</dbReference>
<dbReference type="PDB" id="7MYJ">
    <property type="method" value="X-ray"/>
    <property type="resolution" value="2.95 A"/>
    <property type="chains" value="A/C=2-552"/>
</dbReference>
<dbReference type="PDB" id="8BIK">
    <property type="method" value="X-ray"/>
    <property type="resolution" value="2.50 A"/>
    <property type="chains" value="A/D=1-552"/>
</dbReference>
<dbReference type="PDBsum" id="2H6D"/>
<dbReference type="PDBsum" id="2LTU"/>
<dbReference type="PDBsum" id="2YZA"/>
<dbReference type="PDBsum" id="3AQV"/>
<dbReference type="PDBsum" id="4CFE"/>
<dbReference type="PDBsum" id="4CFF"/>
<dbReference type="PDBsum" id="4ZHX"/>
<dbReference type="PDBsum" id="5EZV"/>
<dbReference type="PDBsum" id="5ISO"/>
<dbReference type="PDBsum" id="6B1U"/>
<dbReference type="PDBsum" id="6B2E"/>
<dbReference type="PDBsum" id="6BX6"/>
<dbReference type="PDBsum" id="7MYJ"/>
<dbReference type="PDBsum" id="8BIK"/>
<dbReference type="BMRB" id="P54646"/>
<dbReference type="SMR" id="P54646"/>
<dbReference type="BioGRID" id="111550">
    <property type="interactions" value="235"/>
</dbReference>
<dbReference type="ComplexPortal" id="CPX-5787">
    <property type="entry name" value="AMPK complex, alpha2-beta1-gamma1 variant"/>
</dbReference>
<dbReference type="ComplexPortal" id="CPX-5790">
    <property type="entry name" value="AMPK complex, alpha2-beta2-gamma1 variant"/>
</dbReference>
<dbReference type="ComplexPortal" id="CPX-5840">
    <property type="entry name" value="AMPK complex, alpha2-beta2-gamma3 variant"/>
</dbReference>
<dbReference type="ComplexPortal" id="CPX-5843">
    <property type="entry name" value="AMPK complex, alpha2-beta1-gamma3 variant"/>
</dbReference>
<dbReference type="ComplexPortal" id="CPX-5844">
    <property type="entry name" value="AMPK complex, alpha2-beta1-gamma2 variant"/>
</dbReference>
<dbReference type="ComplexPortal" id="CPX-5845">
    <property type="entry name" value="AMPK complex, alpha2-beta2-gamma2 variant"/>
</dbReference>
<dbReference type="CORUM" id="P54646"/>
<dbReference type="DIP" id="DIP-39796N"/>
<dbReference type="FunCoup" id="P54646">
    <property type="interactions" value="2136"/>
</dbReference>
<dbReference type="IntAct" id="P54646">
    <property type="interactions" value="168"/>
</dbReference>
<dbReference type="MINT" id="P54646"/>
<dbReference type="STRING" id="9606.ENSP00000360290"/>
<dbReference type="BindingDB" id="P54646"/>
<dbReference type="ChEMBL" id="CHEMBL2116"/>
<dbReference type="DrugBank" id="DB00945">
    <property type="generic name" value="Acetylsalicylic acid"/>
</dbReference>
<dbReference type="DrugBank" id="DB00131">
    <property type="generic name" value="Adenosine phosphate"/>
</dbReference>
<dbReference type="DrugBank" id="DB12010">
    <property type="generic name" value="Fostamatinib"/>
</dbReference>
<dbReference type="DrugBank" id="DB00273">
    <property type="generic name" value="Topiramate"/>
</dbReference>
<dbReference type="DrugCentral" id="P54646"/>
<dbReference type="TCDB" id="8.A.104.1.1">
    <property type="family name" value="the 5'-amp-activated protein kinase (ampk) family"/>
</dbReference>
<dbReference type="GlyConnect" id="985">
    <property type="glycosylation" value="2 N-Linked glycans (1 site)"/>
</dbReference>
<dbReference type="GlyCosmos" id="P54646">
    <property type="glycosylation" value="1 site, 3 glycans"/>
</dbReference>
<dbReference type="GlyGen" id="P54646">
    <property type="glycosylation" value="2 sites, 3 N-linked glycans (1 site), 1 O-linked glycan (1 site)"/>
</dbReference>
<dbReference type="iPTMnet" id="P54646"/>
<dbReference type="PhosphoSitePlus" id="P54646"/>
<dbReference type="BioMuta" id="PRKAA2"/>
<dbReference type="DMDM" id="20178276"/>
<dbReference type="jPOST" id="P54646"/>
<dbReference type="MassIVE" id="P54646"/>
<dbReference type="PaxDb" id="9606-ENSP00000360290"/>
<dbReference type="PeptideAtlas" id="P54646"/>
<dbReference type="ProteomicsDB" id="56689"/>
<dbReference type="Pumba" id="P54646"/>
<dbReference type="Antibodypedia" id="3399">
    <property type="antibodies" value="832 antibodies from 44 providers"/>
</dbReference>
<dbReference type="DNASU" id="5563"/>
<dbReference type="Ensembl" id="ENST00000371244.9">
    <property type="protein sequence ID" value="ENSP00000360290.4"/>
    <property type="gene ID" value="ENSG00000162409.12"/>
</dbReference>
<dbReference type="GeneID" id="5563"/>
<dbReference type="KEGG" id="hsa:5563"/>
<dbReference type="MANE-Select" id="ENST00000371244.9">
    <property type="protein sequence ID" value="ENSP00000360290.4"/>
    <property type="RefSeq nucleotide sequence ID" value="NM_006252.4"/>
    <property type="RefSeq protein sequence ID" value="NP_006243.2"/>
</dbReference>
<dbReference type="UCSC" id="uc001cyk.5">
    <property type="organism name" value="human"/>
</dbReference>
<dbReference type="AGR" id="HGNC:9377"/>
<dbReference type="CTD" id="5563"/>
<dbReference type="DisGeNET" id="5563"/>
<dbReference type="GeneCards" id="PRKAA2"/>
<dbReference type="HGNC" id="HGNC:9377">
    <property type="gene designation" value="PRKAA2"/>
</dbReference>
<dbReference type="HPA" id="ENSG00000162409">
    <property type="expression patterns" value="Tissue enhanced (heart muscle, skeletal muscle, tongue)"/>
</dbReference>
<dbReference type="MIM" id="600497">
    <property type="type" value="gene"/>
</dbReference>
<dbReference type="neXtProt" id="NX_P54646"/>
<dbReference type="OpenTargets" id="ENSG00000162409"/>
<dbReference type="PharmGKB" id="PA33745"/>
<dbReference type="VEuPathDB" id="HostDB:ENSG00000162409"/>
<dbReference type="eggNOG" id="KOG0583">
    <property type="taxonomic scope" value="Eukaryota"/>
</dbReference>
<dbReference type="GeneTree" id="ENSGT00940000156945"/>
<dbReference type="HOGENOM" id="CLU_000288_59_3_1"/>
<dbReference type="InParanoid" id="P54646"/>
<dbReference type="OrthoDB" id="193931at2759"/>
<dbReference type="PAN-GO" id="P54646">
    <property type="GO annotations" value="4 GO annotations based on evolutionary models"/>
</dbReference>
<dbReference type="PhylomeDB" id="P54646"/>
<dbReference type="TreeFam" id="TF314032"/>
<dbReference type="BRENDA" id="2.7.11.1">
    <property type="organism ID" value="2681"/>
</dbReference>
<dbReference type="BRENDA" id="2.7.11.31">
    <property type="organism ID" value="2681"/>
</dbReference>
<dbReference type="PathwayCommons" id="P54646"/>
<dbReference type="Reactome" id="R-HSA-1445148">
    <property type="pathway name" value="Translocation of SLC2A4 (GLUT4) to the plasma membrane"/>
</dbReference>
<dbReference type="Reactome" id="R-HSA-1632852">
    <property type="pathway name" value="Macroautophagy"/>
</dbReference>
<dbReference type="Reactome" id="R-HSA-163680">
    <property type="pathway name" value="AMPK inhibits chREBP transcriptional activation activity"/>
</dbReference>
<dbReference type="Reactome" id="R-HSA-200425">
    <property type="pathway name" value="Carnitine shuttle"/>
</dbReference>
<dbReference type="Reactome" id="R-HSA-2151209">
    <property type="pathway name" value="Activation of PPARGC1A (PGC-1alpha) by phosphorylation"/>
</dbReference>
<dbReference type="Reactome" id="R-HSA-380972">
    <property type="pathway name" value="Energy dependent regulation of mTOR by LKB1-AMPK"/>
</dbReference>
<dbReference type="Reactome" id="R-HSA-5628897">
    <property type="pathway name" value="TP53 Regulates Metabolic Genes"/>
</dbReference>
<dbReference type="Reactome" id="R-HSA-6804756">
    <property type="pathway name" value="Regulation of TP53 Activity through Phosphorylation"/>
</dbReference>
<dbReference type="Reactome" id="R-HSA-9613354">
    <property type="pathway name" value="Lipophagy"/>
</dbReference>
<dbReference type="Reactome" id="R-HSA-9619483">
    <property type="pathway name" value="Activation of AMPK downstream of NMDARs"/>
</dbReference>
<dbReference type="Reactome" id="R-HSA-9759194">
    <property type="pathway name" value="Nuclear events mediated by NFE2L2"/>
</dbReference>
<dbReference type="SignaLink" id="P54646"/>
<dbReference type="SIGNOR" id="P54646"/>
<dbReference type="BioGRID-ORCS" id="5563">
    <property type="hits" value="16 hits in 1188 CRISPR screens"/>
</dbReference>
<dbReference type="CD-CODE" id="DEE660B4">
    <property type="entry name" value="Stress granule"/>
</dbReference>
<dbReference type="ChiTaRS" id="PRKAA2">
    <property type="organism name" value="human"/>
</dbReference>
<dbReference type="EvolutionaryTrace" id="P54646"/>
<dbReference type="GeneWiki" id="PRKAA2"/>
<dbReference type="GenomeRNAi" id="5563"/>
<dbReference type="Pharos" id="P54646">
    <property type="development level" value="Tchem"/>
</dbReference>
<dbReference type="PRO" id="PR:P54646"/>
<dbReference type="Proteomes" id="UP000005640">
    <property type="component" value="Chromosome 1"/>
</dbReference>
<dbReference type="RNAct" id="P54646">
    <property type="molecule type" value="protein"/>
</dbReference>
<dbReference type="Bgee" id="ENSG00000162409">
    <property type="expression patterns" value="Expressed in skeletal muscle tissue of rectus abdominis and 181 other cell types or tissues"/>
</dbReference>
<dbReference type="ExpressionAtlas" id="P54646">
    <property type="expression patterns" value="baseline and differential"/>
</dbReference>
<dbReference type="GO" id="GO:0030424">
    <property type="term" value="C:axon"/>
    <property type="evidence" value="ECO:0000250"/>
    <property type="project" value="ARUK-UCL"/>
</dbReference>
<dbReference type="GO" id="GO:0036064">
    <property type="term" value="C:ciliary basal body"/>
    <property type="evidence" value="ECO:0000314"/>
    <property type="project" value="HPA"/>
</dbReference>
<dbReference type="GO" id="GO:0005737">
    <property type="term" value="C:cytoplasm"/>
    <property type="evidence" value="ECO:0000318"/>
    <property type="project" value="GO_Central"/>
</dbReference>
<dbReference type="GO" id="GO:0010494">
    <property type="term" value="C:cytoplasmic stress granule"/>
    <property type="evidence" value="ECO:0000250"/>
    <property type="project" value="ARUK-UCL"/>
</dbReference>
<dbReference type="GO" id="GO:0005829">
    <property type="term" value="C:cytosol"/>
    <property type="evidence" value="ECO:0000314"/>
    <property type="project" value="HPA"/>
</dbReference>
<dbReference type="GO" id="GO:0030425">
    <property type="term" value="C:dendrite"/>
    <property type="evidence" value="ECO:0000250"/>
    <property type="project" value="ARUK-UCL"/>
</dbReference>
<dbReference type="GO" id="GO:0005794">
    <property type="term" value="C:Golgi apparatus"/>
    <property type="evidence" value="ECO:0000314"/>
    <property type="project" value="HPA"/>
</dbReference>
<dbReference type="GO" id="GO:0043025">
    <property type="term" value="C:neuronal cell body"/>
    <property type="evidence" value="ECO:0000250"/>
    <property type="project" value="ARUK-UCL"/>
</dbReference>
<dbReference type="GO" id="GO:0016607">
    <property type="term" value="C:nuclear speck"/>
    <property type="evidence" value="ECO:0000314"/>
    <property type="project" value="HPA"/>
</dbReference>
<dbReference type="GO" id="GO:0005654">
    <property type="term" value="C:nucleoplasm"/>
    <property type="evidence" value="ECO:0000314"/>
    <property type="project" value="HPA"/>
</dbReference>
<dbReference type="GO" id="GO:0031588">
    <property type="term" value="C:nucleotide-activated protein kinase complex"/>
    <property type="evidence" value="ECO:0000353"/>
    <property type="project" value="ComplexPortal"/>
</dbReference>
<dbReference type="GO" id="GO:0005634">
    <property type="term" value="C:nucleus"/>
    <property type="evidence" value="ECO:0000314"/>
    <property type="project" value="ComplexPortal"/>
</dbReference>
<dbReference type="GO" id="GO:0047322">
    <property type="term" value="F:[hydroxymethylglutaryl-CoA reductase (NADPH)] kinase activity"/>
    <property type="evidence" value="ECO:0007669"/>
    <property type="project" value="UniProtKB-EC"/>
</dbReference>
<dbReference type="GO" id="GO:0004679">
    <property type="term" value="F:AMP-activated protein kinase activity"/>
    <property type="evidence" value="ECO:0000314"/>
    <property type="project" value="UniProtKB"/>
</dbReference>
<dbReference type="GO" id="GO:0005524">
    <property type="term" value="F:ATP binding"/>
    <property type="evidence" value="ECO:0007669"/>
    <property type="project" value="UniProtKB-KW"/>
</dbReference>
<dbReference type="GO" id="GO:0003682">
    <property type="term" value="F:chromatin binding"/>
    <property type="evidence" value="ECO:0000250"/>
    <property type="project" value="UniProtKB"/>
</dbReference>
<dbReference type="GO" id="GO:0140823">
    <property type="term" value="F:histone H2BS36 kinase activity"/>
    <property type="evidence" value="ECO:0000250"/>
    <property type="project" value="UniProtKB"/>
</dbReference>
<dbReference type="GO" id="GO:0046872">
    <property type="term" value="F:metal ion binding"/>
    <property type="evidence" value="ECO:0007669"/>
    <property type="project" value="UniProtKB-KW"/>
</dbReference>
<dbReference type="GO" id="GO:0004672">
    <property type="term" value="F:protein kinase activity"/>
    <property type="evidence" value="ECO:0000304"/>
    <property type="project" value="ProtInc"/>
</dbReference>
<dbReference type="GO" id="GO:0106310">
    <property type="term" value="F:protein serine kinase activity"/>
    <property type="evidence" value="ECO:0007669"/>
    <property type="project" value="RHEA"/>
</dbReference>
<dbReference type="GO" id="GO:0004674">
    <property type="term" value="F:protein serine/threonine kinase activity"/>
    <property type="evidence" value="ECO:0000314"/>
    <property type="project" value="UniProtKB"/>
</dbReference>
<dbReference type="GO" id="GO:0004712">
    <property type="term" value="F:protein serine/threonine/tyrosine kinase activity"/>
    <property type="evidence" value="ECO:0000314"/>
    <property type="project" value="MGI"/>
</dbReference>
<dbReference type="GO" id="GO:0006914">
    <property type="term" value="P:autophagy"/>
    <property type="evidence" value="ECO:0007669"/>
    <property type="project" value="UniProtKB-KW"/>
</dbReference>
<dbReference type="GO" id="GO:0071277">
    <property type="term" value="P:cellular response to calcium ion"/>
    <property type="evidence" value="ECO:0000250"/>
    <property type="project" value="ARUK-UCL"/>
</dbReference>
<dbReference type="GO" id="GO:0042149">
    <property type="term" value="P:cellular response to glucose starvation"/>
    <property type="evidence" value="ECO:0000314"/>
    <property type="project" value="UniProtKB"/>
</dbReference>
<dbReference type="GO" id="GO:0071333">
    <property type="term" value="P:cellular response to glucose stimulus"/>
    <property type="evidence" value="ECO:0000250"/>
    <property type="project" value="ARUK-UCL"/>
</dbReference>
<dbReference type="GO" id="GO:0031669">
    <property type="term" value="P:cellular response to nutrient levels"/>
    <property type="evidence" value="ECO:0000314"/>
    <property type="project" value="ComplexPortal"/>
</dbReference>
<dbReference type="GO" id="GO:0034599">
    <property type="term" value="P:cellular response to oxidative stress"/>
    <property type="evidence" value="ECO:0000250"/>
    <property type="project" value="ARUK-UCL"/>
</dbReference>
<dbReference type="GO" id="GO:0071380">
    <property type="term" value="P:cellular response to prostaglandin E stimulus"/>
    <property type="evidence" value="ECO:0007669"/>
    <property type="project" value="Ensembl"/>
</dbReference>
<dbReference type="GO" id="GO:0071466">
    <property type="term" value="P:cellular response to xenobiotic stimulus"/>
    <property type="evidence" value="ECO:0007669"/>
    <property type="project" value="Ensembl"/>
</dbReference>
<dbReference type="GO" id="GO:0006695">
    <property type="term" value="P:cholesterol biosynthetic process"/>
    <property type="evidence" value="ECO:0007669"/>
    <property type="project" value="UniProtKB-KW"/>
</dbReference>
<dbReference type="GO" id="GO:0097009">
    <property type="term" value="P:energy homeostasis"/>
    <property type="evidence" value="ECO:0000250"/>
    <property type="project" value="UniProtKB"/>
</dbReference>
<dbReference type="GO" id="GO:0006633">
    <property type="term" value="P:fatty acid biosynthetic process"/>
    <property type="evidence" value="ECO:0007669"/>
    <property type="project" value="UniProtKB-KW"/>
</dbReference>
<dbReference type="GO" id="GO:0055089">
    <property type="term" value="P:fatty acid homeostasis"/>
    <property type="evidence" value="ECO:0000250"/>
    <property type="project" value="UniProtKB"/>
</dbReference>
<dbReference type="GO" id="GO:0042593">
    <property type="term" value="P:glucose homeostasis"/>
    <property type="evidence" value="ECO:0000250"/>
    <property type="project" value="UniProtKB"/>
</dbReference>
<dbReference type="GO" id="GO:0008610">
    <property type="term" value="P:lipid biosynthetic process"/>
    <property type="evidence" value="ECO:0000250"/>
    <property type="project" value="UniProtKB"/>
</dbReference>
<dbReference type="GO" id="GO:1905691">
    <property type="term" value="P:lipid droplet disassembly"/>
    <property type="evidence" value="ECO:0000314"/>
    <property type="project" value="UniProtKB"/>
</dbReference>
<dbReference type="GO" id="GO:0043066">
    <property type="term" value="P:negative regulation of apoptotic process"/>
    <property type="evidence" value="ECO:0000250"/>
    <property type="project" value="UniProtKB"/>
</dbReference>
<dbReference type="GO" id="GO:0010629">
    <property type="term" value="P:negative regulation of gene expression"/>
    <property type="evidence" value="ECO:0000250"/>
    <property type="project" value="ARUK-UCL"/>
</dbReference>
<dbReference type="GO" id="GO:1903944">
    <property type="term" value="P:negative regulation of hepatocyte apoptotic process"/>
    <property type="evidence" value="ECO:0000314"/>
    <property type="project" value="UniProt"/>
</dbReference>
<dbReference type="GO" id="GO:0032007">
    <property type="term" value="P:negative regulation of TOR signaling"/>
    <property type="evidence" value="ECO:0000250"/>
    <property type="project" value="UniProtKB"/>
</dbReference>
<dbReference type="GO" id="GO:1904262">
    <property type="term" value="P:negative regulation of TORC1 signaling"/>
    <property type="evidence" value="ECO:0000314"/>
    <property type="project" value="UniProtKB"/>
</dbReference>
<dbReference type="GO" id="GO:1904428">
    <property type="term" value="P:negative regulation of tubulin deacetylation"/>
    <property type="evidence" value="ECO:0000250"/>
    <property type="project" value="ARUK-UCL"/>
</dbReference>
<dbReference type="GO" id="GO:0010508">
    <property type="term" value="P:positive regulation of autophagy"/>
    <property type="evidence" value="ECO:0000250"/>
    <property type="project" value="UniProtKB"/>
</dbReference>
<dbReference type="GO" id="GO:0045821">
    <property type="term" value="P:positive regulation of glycolytic process"/>
    <property type="evidence" value="ECO:0000250"/>
    <property type="project" value="UniProtKB"/>
</dbReference>
<dbReference type="GO" id="GO:0016239">
    <property type="term" value="P:positive regulation of macroautophagy"/>
    <property type="evidence" value="ECO:0000304"/>
    <property type="project" value="ParkinsonsUK-UCL"/>
</dbReference>
<dbReference type="GO" id="GO:1903829">
    <property type="term" value="P:positive regulation of protein localization"/>
    <property type="evidence" value="ECO:0000250"/>
    <property type="project" value="ARUK-UCL"/>
</dbReference>
<dbReference type="GO" id="GO:1990044">
    <property type="term" value="P:protein localization to lipid droplet"/>
    <property type="evidence" value="ECO:0000314"/>
    <property type="project" value="UniProtKB"/>
</dbReference>
<dbReference type="GO" id="GO:0006468">
    <property type="term" value="P:protein phosphorylation"/>
    <property type="evidence" value="ECO:0000304"/>
    <property type="project" value="ProtInc"/>
</dbReference>
<dbReference type="GO" id="GO:0042752">
    <property type="term" value="P:regulation of circadian rhythm"/>
    <property type="evidence" value="ECO:0000250"/>
    <property type="project" value="UniProtKB"/>
</dbReference>
<dbReference type="GO" id="GO:0016241">
    <property type="term" value="P:regulation of macroautophagy"/>
    <property type="evidence" value="ECO:0000250"/>
    <property type="project" value="UniProtKB"/>
</dbReference>
<dbReference type="GO" id="GO:0070507">
    <property type="term" value="P:regulation of microtubule cytoskeleton organization"/>
    <property type="evidence" value="ECO:0000250"/>
    <property type="project" value="ARUK-UCL"/>
</dbReference>
<dbReference type="GO" id="GO:0062028">
    <property type="term" value="P:regulation of stress granule assembly"/>
    <property type="evidence" value="ECO:0007669"/>
    <property type="project" value="Ensembl"/>
</dbReference>
<dbReference type="GO" id="GO:0014850">
    <property type="term" value="P:response to muscle activity"/>
    <property type="evidence" value="ECO:0007669"/>
    <property type="project" value="Ensembl"/>
</dbReference>
<dbReference type="GO" id="GO:0048511">
    <property type="term" value="P:rhythmic process"/>
    <property type="evidence" value="ECO:0007669"/>
    <property type="project" value="UniProtKB-KW"/>
</dbReference>
<dbReference type="GO" id="GO:0007165">
    <property type="term" value="P:signal transduction"/>
    <property type="evidence" value="ECO:0000304"/>
    <property type="project" value="ProtInc"/>
</dbReference>
<dbReference type="GO" id="GO:0016055">
    <property type="term" value="P:Wnt signaling pathway"/>
    <property type="evidence" value="ECO:0007669"/>
    <property type="project" value="UniProtKB-KW"/>
</dbReference>
<dbReference type="CDD" id="cd12200">
    <property type="entry name" value="AMPKA2_C"/>
    <property type="match status" value="1"/>
</dbReference>
<dbReference type="CDD" id="cd14079">
    <property type="entry name" value="STKc_AMPK_alpha"/>
    <property type="match status" value="1"/>
</dbReference>
<dbReference type="CDD" id="cd14404">
    <property type="entry name" value="UBA_AID_AAPK2"/>
    <property type="match status" value="1"/>
</dbReference>
<dbReference type="FunFam" id="1.10.510.10:FF:000079">
    <property type="entry name" value="Non-specific serine/threonine protein kinase"/>
    <property type="match status" value="1"/>
</dbReference>
<dbReference type="FunFam" id="1.10.8.10:FF:000014">
    <property type="entry name" value="Non-specific serine/threonine protein kinase"/>
    <property type="match status" value="1"/>
</dbReference>
<dbReference type="FunFam" id="3.30.200.20:FF:000136">
    <property type="entry name" value="Non-specific serine/threonine protein kinase"/>
    <property type="match status" value="1"/>
</dbReference>
<dbReference type="FunFam" id="3.30.310.80:FF:000003">
    <property type="entry name" value="Non-specific serine/threonine protein kinase"/>
    <property type="match status" value="1"/>
</dbReference>
<dbReference type="Gene3D" id="1.10.8.10">
    <property type="entry name" value="DNA helicase RuvA subunit, C-terminal domain"/>
    <property type="match status" value="1"/>
</dbReference>
<dbReference type="Gene3D" id="3.30.310.80">
    <property type="entry name" value="Kinase associated domain 1, KA1"/>
    <property type="match status" value="1"/>
</dbReference>
<dbReference type="Gene3D" id="3.30.200.20">
    <property type="entry name" value="Phosphorylase Kinase, domain 1"/>
    <property type="match status" value="1"/>
</dbReference>
<dbReference type="Gene3D" id="1.10.510.10">
    <property type="entry name" value="Transferase(Phosphotransferase) domain 1"/>
    <property type="match status" value="1"/>
</dbReference>
<dbReference type="IDEAL" id="IID00661"/>
<dbReference type="InterPro" id="IPR032270">
    <property type="entry name" value="AMPK_C"/>
</dbReference>
<dbReference type="InterPro" id="IPR039148">
    <property type="entry name" value="AMPKA2_C"/>
</dbReference>
<dbReference type="InterPro" id="IPR028375">
    <property type="entry name" value="KA1/Ssp2_C"/>
</dbReference>
<dbReference type="InterPro" id="IPR011009">
    <property type="entry name" value="Kinase-like_dom_sf"/>
</dbReference>
<dbReference type="InterPro" id="IPR049020">
    <property type="entry name" value="PRKAA1/2_AID"/>
</dbReference>
<dbReference type="InterPro" id="IPR028783">
    <property type="entry name" value="PRKAA2"/>
</dbReference>
<dbReference type="InterPro" id="IPR000719">
    <property type="entry name" value="Prot_kinase_dom"/>
</dbReference>
<dbReference type="InterPro" id="IPR017441">
    <property type="entry name" value="Protein_kinase_ATP_BS"/>
</dbReference>
<dbReference type="InterPro" id="IPR008271">
    <property type="entry name" value="Ser/Thr_kinase_AS"/>
</dbReference>
<dbReference type="PANTHER" id="PTHR24346:SF104">
    <property type="entry name" value="5'-AMP-ACTIVATED PROTEIN KINASE CATALYTIC SUBUNIT ALPHA-2"/>
    <property type="match status" value="1"/>
</dbReference>
<dbReference type="PANTHER" id="PTHR24346">
    <property type="entry name" value="MAP/MICROTUBULE AFFINITY-REGULATING KINASE"/>
    <property type="match status" value="1"/>
</dbReference>
<dbReference type="Pfam" id="PF16579">
    <property type="entry name" value="AdenylateSensor"/>
    <property type="match status" value="1"/>
</dbReference>
<dbReference type="Pfam" id="PF21147">
    <property type="entry name" value="AMPK_alpha_AID"/>
    <property type="match status" value="1"/>
</dbReference>
<dbReference type="Pfam" id="PF00069">
    <property type="entry name" value="Pkinase"/>
    <property type="match status" value="1"/>
</dbReference>
<dbReference type="SMART" id="SM00220">
    <property type="entry name" value="S_TKc"/>
    <property type="match status" value="1"/>
</dbReference>
<dbReference type="SUPFAM" id="SSF103243">
    <property type="entry name" value="KA1-like"/>
    <property type="match status" value="1"/>
</dbReference>
<dbReference type="SUPFAM" id="SSF56112">
    <property type="entry name" value="Protein kinase-like (PK-like)"/>
    <property type="match status" value="1"/>
</dbReference>
<dbReference type="PROSITE" id="PS00107">
    <property type="entry name" value="PROTEIN_KINASE_ATP"/>
    <property type="match status" value="1"/>
</dbReference>
<dbReference type="PROSITE" id="PS50011">
    <property type="entry name" value="PROTEIN_KINASE_DOM"/>
    <property type="match status" value="1"/>
</dbReference>
<dbReference type="PROSITE" id="PS00108">
    <property type="entry name" value="PROTEIN_KINASE_ST"/>
    <property type="match status" value="1"/>
</dbReference>
<proteinExistence type="evidence at protein level"/>
<feature type="chain" id="PRO_0000085594" description="5'-AMP-activated protein kinase catalytic subunit alpha-2">
    <location>
        <begin position="1"/>
        <end position="552"/>
    </location>
</feature>
<feature type="domain" description="Protein kinase" evidence="4">
    <location>
        <begin position="16"/>
        <end position="268"/>
    </location>
</feature>
<feature type="region of interest" description="AIS" evidence="2">
    <location>
        <begin position="291"/>
        <end position="376"/>
    </location>
</feature>
<feature type="region of interest" description="Disordered" evidence="6">
    <location>
        <begin position="477"/>
        <end position="521"/>
    </location>
</feature>
<feature type="compositionally biased region" description="Polar residues" evidence="6">
    <location>
        <begin position="480"/>
        <end position="490"/>
    </location>
</feature>
<feature type="compositionally biased region" description="Polar residues" evidence="6">
    <location>
        <begin position="501"/>
        <end position="510"/>
    </location>
</feature>
<feature type="compositionally biased region" description="Low complexity" evidence="6">
    <location>
        <begin position="511"/>
        <end position="521"/>
    </location>
</feature>
<feature type="active site" description="Proton acceptor" evidence="4 5">
    <location>
        <position position="139"/>
    </location>
</feature>
<feature type="binding site" evidence="4">
    <location>
        <begin position="22"/>
        <end position="30"/>
    </location>
    <ligand>
        <name>ATP</name>
        <dbReference type="ChEBI" id="CHEBI:30616"/>
    </ligand>
</feature>
<feature type="binding site" evidence="4">
    <location>
        <position position="45"/>
    </location>
    <ligand>
        <name>ATP</name>
        <dbReference type="ChEBI" id="CHEBI:30616"/>
    </ligand>
</feature>
<feature type="modified residue" description="Phosphothreonine; by LKB1 and CaMKK2" evidence="13 25 27">
    <location>
        <position position="172"/>
    </location>
</feature>
<feature type="modified residue" description="Phosphothreonine" evidence="1">
    <location>
        <position position="258"/>
    </location>
</feature>
<feature type="modified residue" description="Phosphoserine" evidence="41 42 43">
    <location>
        <position position="377"/>
    </location>
</feature>
<feature type="modified residue" description="Phosphoserine" evidence="1">
    <location>
        <position position="491"/>
    </location>
</feature>
<feature type="sequence variant" id="VAR_035623" description="In breast cancer samples; infiltrating ductal carcinoma; somatic mutation." evidence="14 15">
    <original>P</original>
    <variation>T</variation>
    <location>
        <position position="371"/>
    </location>
</feature>
<feature type="sequence variant" id="VAR_040355" description="In a gastric adenocarcinoma sample; somatic mutation." evidence="15">
    <original>R</original>
    <variation>Q</variation>
    <location>
        <position position="407"/>
    </location>
</feature>
<feature type="sequence variant" id="VAR_035624" description="In a breast cancer sample; somatic mutation." evidence="14">
    <original>S</original>
    <variation>G</variation>
    <location>
        <position position="523"/>
    </location>
</feature>
<feature type="mutagenesis site" description="Complete loss of kinase activity." evidence="39">
    <original>K</original>
    <variation>R</variation>
    <location>
        <position position="45"/>
    </location>
</feature>
<feature type="mutagenesis site" description="Loss of ARF6 activation. Loss of interaction with ACSS2." evidence="27 31">
    <original>T</original>
    <variation>A</variation>
    <location>
        <position position="172"/>
    </location>
</feature>
<feature type="mutagenesis site" description="Phosphomimetic mutant." evidence="23">
    <original>T</original>
    <variation>D</variation>
    <location>
        <position position="172"/>
    </location>
</feature>
<feature type="sequence conflict" description="In Ref. 1; AAA64745." evidence="38" ref="1">
    <original>A</original>
    <variation>T</variation>
    <location>
        <position position="180"/>
    </location>
</feature>
<feature type="sequence conflict" description="In Ref. 1; AAA64745." evidence="38" ref="1">
    <original>D</original>
    <variation>G</variation>
    <location>
        <position position="271"/>
    </location>
</feature>
<feature type="sequence conflict" description="In Ref. 1; AAA64745." evidence="38" ref="1">
    <original>HL</original>
    <variation>RQ</variation>
    <location>
        <begin position="403"/>
        <end position="404"/>
    </location>
</feature>
<feature type="strand" evidence="44">
    <location>
        <begin position="16"/>
        <end position="24"/>
    </location>
</feature>
<feature type="strand" evidence="44">
    <location>
        <begin position="26"/>
        <end position="35"/>
    </location>
</feature>
<feature type="turn" evidence="44">
    <location>
        <begin position="36"/>
        <end position="38"/>
    </location>
</feature>
<feature type="strand" evidence="44">
    <location>
        <begin position="41"/>
        <end position="48"/>
    </location>
</feature>
<feature type="helix" evidence="44">
    <location>
        <begin position="49"/>
        <end position="54"/>
    </location>
</feature>
<feature type="helix" evidence="44">
    <location>
        <begin position="58"/>
        <end position="69"/>
    </location>
</feature>
<feature type="strand" evidence="44">
    <location>
        <begin position="79"/>
        <end position="84"/>
    </location>
</feature>
<feature type="strand" evidence="44">
    <location>
        <begin position="86"/>
        <end position="94"/>
    </location>
</feature>
<feature type="helix" evidence="44">
    <location>
        <begin position="101"/>
        <end position="108"/>
    </location>
</feature>
<feature type="helix" evidence="44">
    <location>
        <begin position="113"/>
        <end position="133"/>
    </location>
</feature>
<feature type="helix" evidence="44">
    <location>
        <begin position="142"/>
        <end position="144"/>
    </location>
</feature>
<feature type="strand" evidence="44">
    <location>
        <begin position="145"/>
        <end position="147"/>
    </location>
</feature>
<feature type="strand" evidence="44">
    <location>
        <begin position="153"/>
        <end position="155"/>
    </location>
</feature>
<feature type="helix" evidence="44">
    <location>
        <begin position="160"/>
        <end position="162"/>
    </location>
</feature>
<feature type="helix" evidence="46">
    <location>
        <begin position="177"/>
        <end position="179"/>
    </location>
</feature>
<feature type="helix" evidence="44">
    <location>
        <begin position="183"/>
        <end position="185"/>
    </location>
</feature>
<feature type="helix" evidence="44">
    <location>
        <begin position="192"/>
        <end position="209"/>
    </location>
</feature>
<feature type="helix" evidence="44">
    <location>
        <begin position="219"/>
        <end position="228"/>
    </location>
</feature>
<feature type="strand" evidence="45">
    <location>
        <begin position="235"/>
        <end position="237"/>
    </location>
</feature>
<feature type="helix" evidence="44">
    <location>
        <begin position="239"/>
        <end position="248"/>
    </location>
</feature>
<feature type="helix" evidence="44">
    <location>
        <begin position="253"/>
        <end position="255"/>
    </location>
</feature>
<feature type="helix" evidence="44">
    <location>
        <begin position="259"/>
        <end position="264"/>
    </location>
</feature>
<feature type="helix" evidence="44">
    <location>
        <begin position="266"/>
        <end position="269"/>
    </location>
</feature>
<feature type="helix" evidence="44">
    <location>
        <begin position="274"/>
        <end position="276"/>
    </location>
</feature>
<feature type="helix" evidence="46">
    <location>
        <begin position="283"/>
        <end position="286"/>
    </location>
</feature>
<feature type="helix" evidence="46">
    <location>
        <begin position="290"/>
        <end position="299"/>
    </location>
</feature>
<feature type="helix" evidence="46">
    <location>
        <begin position="304"/>
        <end position="312"/>
    </location>
</feature>
<feature type="helix" evidence="46">
    <location>
        <begin position="319"/>
        <end position="335"/>
    </location>
</feature>
<feature type="helix" evidence="46">
    <location>
        <begin position="338"/>
        <end position="341"/>
    </location>
</feature>
<feature type="strand" evidence="46">
    <location>
        <begin position="403"/>
        <end position="408"/>
    </location>
</feature>
<feature type="helix" evidence="46">
    <location>
        <begin position="412"/>
        <end position="425"/>
    </location>
</feature>
<feature type="strand" evidence="46">
    <location>
        <begin position="429"/>
        <end position="434"/>
    </location>
</feature>
<feature type="strand" evidence="46">
    <location>
        <begin position="437"/>
        <end position="443"/>
    </location>
</feature>
<feature type="turn" evidence="46">
    <location>
        <begin position="445"/>
        <end position="447"/>
    </location>
</feature>
<feature type="strand" evidence="46">
    <location>
        <begin position="450"/>
        <end position="461"/>
    </location>
</feature>
<feature type="strand" evidence="46">
    <location>
        <begin position="464"/>
        <end position="471"/>
    </location>
</feature>
<feature type="helix" evidence="46">
    <location>
        <begin position="535"/>
        <end position="549"/>
    </location>
</feature>
<evidence type="ECO:0000250" key="1">
    <source>
        <dbReference type="UniProtKB" id="Q09137"/>
    </source>
</evidence>
<evidence type="ECO:0000250" key="2">
    <source>
        <dbReference type="UniProtKB" id="Q13131"/>
    </source>
</evidence>
<evidence type="ECO:0000250" key="3">
    <source>
        <dbReference type="UniProtKB" id="Q8BRK8"/>
    </source>
</evidence>
<evidence type="ECO:0000255" key="4">
    <source>
        <dbReference type="PROSITE-ProRule" id="PRU00159"/>
    </source>
</evidence>
<evidence type="ECO:0000255" key="5">
    <source>
        <dbReference type="PROSITE-ProRule" id="PRU10027"/>
    </source>
</evidence>
<evidence type="ECO:0000256" key="6">
    <source>
        <dbReference type="SAM" id="MobiDB-lite"/>
    </source>
</evidence>
<evidence type="ECO:0000269" key="7">
    <source>
    </source>
</evidence>
<evidence type="ECO:0000269" key="8">
    <source>
    </source>
</evidence>
<evidence type="ECO:0000269" key="9">
    <source>
    </source>
</evidence>
<evidence type="ECO:0000269" key="10">
    <source>
    </source>
</evidence>
<evidence type="ECO:0000269" key="11">
    <source>
    </source>
</evidence>
<evidence type="ECO:0000269" key="12">
    <source>
    </source>
</evidence>
<evidence type="ECO:0000269" key="13">
    <source>
    </source>
</evidence>
<evidence type="ECO:0000269" key="14">
    <source>
    </source>
</evidence>
<evidence type="ECO:0000269" key="15">
    <source>
    </source>
</evidence>
<evidence type="ECO:0000269" key="16">
    <source>
    </source>
</evidence>
<evidence type="ECO:0000269" key="17">
    <source>
    </source>
</evidence>
<evidence type="ECO:0000269" key="18">
    <source>
    </source>
</evidence>
<evidence type="ECO:0000269" key="19">
    <source>
    </source>
</evidence>
<evidence type="ECO:0000269" key="20">
    <source>
    </source>
</evidence>
<evidence type="ECO:0000269" key="21">
    <source>
    </source>
</evidence>
<evidence type="ECO:0000269" key="22">
    <source>
    </source>
</evidence>
<evidence type="ECO:0000269" key="23">
    <source>
    </source>
</evidence>
<evidence type="ECO:0000269" key="24">
    <source>
    </source>
</evidence>
<evidence type="ECO:0000269" key="25">
    <source>
    </source>
</evidence>
<evidence type="ECO:0000269" key="26">
    <source>
    </source>
</evidence>
<evidence type="ECO:0000269" key="27">
    <source>
    </source>
</evidence>
<evidence type="ECO:0000269" key="28">
    <source>
    </source>
</evidence>
<evidence type="ECO:0000269" key="29">
    <source>
    </source>
</evidence>
<evidence type="ECO:0000269" key="30">
    <source>
    </source>
</evidence>
<evidence type="ECO:0000269" key="31">
    <source>
    </source>
</evidence>
<evidence type="ECO:0000269" key="32">
    <source>
    </source>
</evidence>
<evidence type="ECO:0000269" key="33">
    <source>
    </source>
</evidence>
<evidence type="ECO:0000269" key="34">
    <source>
    </source>
</evidence>
<evidence type="ECO:0000269" key="35">
    <source>
    </source>
</evidence>
<evidence type="ECO:0000303" key="36">
    <source>
    </source>
</evidence>
<evidence type="ECO:0000303" key="37">
    <source>
    </source>
</evidence>
<evidence type="ECO:0000305" key="38"/>
<evidence type="ECO:0000305" key="39">
    <source>
    </source>
</evidence>
<evidence type="ECO:0000312" key="40">
    <source>
        <dbReference type="HGNC" id="HGNC:9377"/>
    </source>
</evidence>
<evidence type="ECO:0007744" key="41">
    <source>
    </source>
</evidence>
<evidence type="ECO:0007744" key="42">
    <source>
    </source>
</evidence>
<evidence type="ECO:0007744" key="43">
    <source>
    </source>
</evidence>
<evidence type="ECO:0007829" key="44">
    <source>
        <dbReference type="PDB" id="2H6D"/>
    </source>
</evidence>
<evidence type="ECO:0007829" key="45">
    <source>
        <dbReference type="PDB" id="6BX6"/>
    </source>
</evidence>
<evidence type="ECO:0007829" key="46">
    <source>
        <dbReference type="PDB" id="8BIK"/>
    </source>
</evidence>
<protein>
    <recommendedName>
        <fullName>5'-AMP-activated protein kinase catalytic subunit alpha-2</fullName>
        <shortName>AMPK subunit alpha-2</shortName>
        <ecNumber evidence="27 29 33 34">2.7.11.1</ecNumber>
    </recommendedName>
    <alternativeName>
        <fullName>Acetyl-CoA carboxylase kinase</fullName>
        <shortName>ACACA kinase</shortName>
    </alternativeName>
    <alternativeName>
        <fullName>Hydroxymethylglutaryl-CoA reductase kinase</fullName>
        <shortName>HMGCR kinase</shortName>
        <ecNumber evidence="1">2.7.11.31</ecNumber>
    </alternativeName>
</protein>
<gene>
    <name evidence="40" type="primary">PRKAA2</name>
    <name type="synonym">AMPK</name>
    <name type="synonym">AMPK2</name>
</gene>
<accession>P54646</accession>
<accession>Q9H1E8</accession>
<accession>Q9UD43</accession>
<keyword id="KW-0002">3D-structure</keyword>
<keyword id="KW-0067">ATP-binding</keyword>
<keyword id="KW-0072">Autophagy</keyword>
<keyword id="KW-0090">Biological rhythms</keyword>
<keyword id="KW-0152">Cholesterol biosynthesis</keyword>
<keyword id="KW-0153">Cholesterol metabolism</keyword>
<keyword id="KW-0156">Chromatin regulator</keyword>
<keyword id="KW-0963">Cytoplasm</keyword>
<keyword id="KW-0275">Fatty acid biosynthesis</keyword>
<keyword id="KW-0276">Fatty acid metabolism</keyword>
<keyword id="KW-0418">Kinase</keyword>
<keyword id="KW-0444">Lipid biosynthesis</keyword>
<keyword id="KW-0443">Lipid metabolism</keyword>
<keyword id="KW-0460">Magnesium</keyword>
<keyword id="KW-0479">Metal-binding</keyword>
<keyword id="KW-0547">Nucleotide-binding</keyword>
<keyword id="KW-0539">Nucleus</keyword>
<keyword id="KW-0597">Phosphoprotein</keyword>
<keyword id="KW-1267">Proteomics identification</keyword>
<keyword id="KW-1185">Reference proteome</keyword>
<keyword id="KW-0723">Serine/threonine-protein kinase</keyword>
<keyword id="KW-0752">Steroid biosynthesis</keyword>
<keyword id="KW-0753">Steroid metabolism</keyword>
<keyword id="KW-0756">Sterol biosynthesis</keyword>
<keyword id="KW-1207">Sterol metabolism</keyword>
<keyword id="KW-0804">Transcription</keyword>
<keyword id="KW-0805">Transcription regulation</keyword>
<keyword id="KW-0808">Transferase</keyword>
<keyword id="KW-0832">Ubl conjugation</keyword>
<keyword id="KW-0879">Wnt signaling pathway</keyword>
<sequence>MAEKQKHDGRVKIGHYVLGDTLGVGTFGKVKIGEHQLTGHKVAVKILNRQKIRSLDVVGKIKREIQNLKLFRHPHIIKLYQVISTPTDFFMVMEYVSGGELFDYICKHGRVEEMEARRLFQQILSAVDYCHRHMVVHRDLKPENVLLDAHMNAKIADFGLSNMMSDGEFLRTSCGSPNYAAPEVISGRLYAGPEVDIWSCGVILYALLCGTLPFDDEHVPTLFKKIRGGVFYIPEYLNRSVATLLMHMLQVDPLKRATIKDIREHEWFKQDLPSYLFPEDPSYDANVIDDEAVKEVCEKFECTESEVMNSLYSGDPQDQLAVAYHLIIDNRRIMNQASEFYLASSPPSGSFMDDSAMHIPPGLKPHPERMPPLIADSPKARCPLDALNTTKPKSLAVKKAKWHLGIRSQSKPYDIMAEVYRAMKQLDFEWKVVNAYHLRVRRKNPVTGNYVKMSLQLYLVDNRSYLLDFKSIDDEVVEQRSGSSTPQRSCSAAGLHRPRSSFDSTTAESHSLSGSLTGSLTGSTLSSVSPRLGSHTMDFFEMCASLITTLAR</sequence>
<comment type="function">
    <text evidence="1 3 7 8 10 11 12 16 17 18 19 20 21 26 27 28 29 30 31 32 33 34 35 36 37">Catalytic subunit of AMP-activated protein kinase (AMPK), an energy sensor protein kinase that plays a key role in regulating cellular energy metabolism (PubMed:17307971, PubMed:17712357). In response to reduction of intracellular ATP levels, AMPK activates energy-producing pathways and inhibits energy-consuming processes: inhibits protein, carbohydrate and lipid biosynthesis, as well as cell growth and proliferation (PubMed:17307971, PubMed:17712357). AMPK acts via direct phosphorylation of metabolic enzymes, and by longer-term effects via phosphorylation of transcription regulators (PubMed:17307971, PubMed:17712357). Regulates lipid synthesis by phosphorylating and inactivating lipid metabolic enzymes such as ACACA, ACACB, GYS1, HMGCR and LIPE; regulates fatty acid and cholesterol synthesis by phosphorylating acetyl-CoA carboxylase (ACACA and ACACB) and hormone-sensitive lipase (LIPE) enzymes, respectively (PubMed:7959015). Promotes lipolysis of lipid droplets by mediating phosphorylation of isoform 1 of CHKA (CHKalpha2) (PubMed:34077757). Regulates insulin-signaling and glycolysis by phosphorylating IRS1, PFKFB2 and PFKFB3 (By similarity). Involved in insulin receptor/INSR internalization (PubMed:25687571). AMPK stimulates glucose uptake in muscle by increasing the translocation of the glucose transporter SLC2A4/GLUT4 to the plasma membrane, possibly by mediating phosphorylation of TBC1D4/AS160 (By similarity). Regulates transcription and chromatin structure by phosphorylating transcription regulators involved in energy metabolism such as CRTC2/TORC2, FOXO3, histone H2B, HDAC5, MEF2C, MLXIPL/ChREBP, EP300, HNF4A, p53/TP53, SREBF1, SREBF2 and PPARGC1A (PubMed:11518699, PubMed:11554766, PubMed:15866171, PubMed:17711846, PubMed:18184930). Acts as a key regulator of glucose homeostasis in liver by phosphorylating CRTC2/TORC2, leading to CRTC2/TORC2 sequestration in the cytoplasm (By similarity). In response to stress, phosphorylates 'Ser-36' of histone H2B (H2BS36ph), leading to promote transcription (By similarity). Acts as a key regulator of cell growth and proliferation by phosphorylating FNIP1, TSC2, RPTOR, WDR24 and ATG1/ULK1: in response to nutrient limitation, negatively regulates the mTORC1 complex by phosphorylating RPTOR component of the mTORC1 complex and by phosphorylating and activating TSC2 (PubMed:14651849, PubMed:20160076, PubMed:21205641). Also phosphorylates and inhibits GATOR2 subunit WDR24 in response to nutrient limitation, leading to suppress glucose-mediated mTORC1 activation (PubMed:36732624). In response to energetic stress, phosphorylates FNIP1, inactivating the non-canonical mTORC1 signaling, thereby promoting nuclear translocation of TFEB and TFE3, and inducing transcription of lysosomal or autophagy genes (PubMed:37079666). In response to nutrient limitation, promotes autophagy by phosphorylating and activating ATG1/ULK1 (PubMed:21205641). In that process, it also activates WDR45/WIPI4 (PubMed:28561066). Phosphorylates CASP6, thereby preventing its autoprocessing and subsequent activation (PubMed:32029622). AMPK also acts as a regulator of circadian rhythm by mediating phosphorylation of CRY1, leading to destabilize it (By similarity). May regulate the Wnt signaling pathway by phosphorylating CTNNB1, leading to stabilize it (By similarity). Also acts as a regulator of cellular polarity by remodeling the actin cytoskeleton; probably by indirectly activating myosin (PubMed:17486097). Also phosphorylates CFTR, EEF2K, KLC1, NOS3 and SLC12A1 (PubMed:12519745, PubMed:20074060). Plays an important role in the differential regulation of pro-autophagy (composed of PIK3C3, BECN1, PIK3R4 and UVRAG or ATG14) and non-autophagy (composed of PIK3C3, BECN1 and PIK3R4) complexes, in response to glucose starvation (By similarity). Can inhibit the non-autophagy complex by phosphorylating PIK3C3 and can activate the pro-autophagy complex by phosphorylating BECN1 (By similarity). Upon glucose starvation, promotes ARF6 activation in a kinase-independent manner leading to cell migration (PubMed:36017701). Upon glucose deprivation mediates the phosphorylation of ACSS2 at 'Ser-659', which exposes the nuclear localization signal of ACSS2, required for its interaction with KPNA1 and nuclear translocation (PubMed:28552616). Upon stress, regulates mitochondrial fragmentation through phosphorylation of MTFR1L (PubMed:36367943).</text>
</comment>
<comment type="catalytic activity">
    <reaction evidence="27 29 33 34">
        <text>L-seryl-[protein] + ATP = O-phospho-L-seryl-[protein] + ADP + H(+)</text>
        <dbReference type="Rhea" id="RHEA:17989"/>
        <dbReference type="Rhea" id="RHEA-COMP:9863"/>
        <dbReference type="Rhea" id="RHEA-COMP:11604"/>
        <dbReference type="ChEBI" id="CHEBI:15378"/>
        <dbReference type="ChEBI" id="CHEBI:29999"/>
        <dbReference type="ChEBI" id="CHEBI:30616"/>
        <dbReference type="ChEBI" id="CHEBI:83421"/>
        <dbReference type="ChEBI" id="CHEBI:456216"/>
        <dbReference type="EC" id="2.7.11.1"/>
    </reaction>
</comment>
<comment type="catalytic activity">
    <reaction evidence="1">
        <text>L-threonyl-[protein] + ATP = O-phospho-L-threonyl-[protein] + ADP + H(+)</text>
        <dbReference type="Rhea" id="RHEA:46608"/>
        <dbReference type="Rhea" id="RHEA-COMP:11060"/>
        <dbReference type="Rhea" id="RHEA-COMP:11605"/>
        <dbReference type="ChEBI" id="CHEBI:15378"/>
        <dbReference type="ChEBI" id="CHEBI:30013"/>
        <dbReference type="ChEBI" id="CHEBI:30616"/>
        <dbReference type="ChEBI" id="CHEBI:61977"/>
        <dbReference type="ChEBI" id="CHEBI:456216"/>
        <dbReference type="EC" id="2.7.11.1"/>
    </reaction>
</comment>
<comment type="catalytic activity">
    <reaction evidence="1">
        <text>L-seryl-[acetyl-CoA carboxylase] + ATP = O-phospho-L-seryl-[acetyl-CoA carboxylase] + ADP + H(+)</text>
        <dbReference type="Rhea" id="RHEA:20333"/>
        <dbReference type="Rhea" id="RHEA-COMP:13722"/>
        <dbReference type="Rhea" id="RHEA-COMP:13723"/>
        <dbReference type="ChEBI" id="CHEBI:15378"/>
        <dbReference type="ChEBI" id="CHEBI:29999"/>
        <dbReference type="ChEBI" id="CHEBI:30616"/>
        <dbReference type="ChEBI" id="CHEBI:83421"/>
        <dbReference type="ChEBI" id="CHEBI:456216"/>
    </reaction>
</comment>
<comment type="catalytic activity">
    <reaction evidence="1">
        <text>L-seryl-[3-hydroxy-3-methylglutaryl-coenzyme A reductase] + ATP = O-phospho-L-seryl-[3-hydroxy-3-methylglutaryl-coenzyme A reductase] + ADP + H(+)</text>
        <dbReference type="Rhea" id="RHEA:23172"/>
        <dbReference type="Rhea" id="RHEA-COMP:13692"/>
        <dbReference type="Rhea" id="RHEA-COMP:13693"/>
        <dbReference type="ChEBI" id="CHEBI:15378"/>
        <dbReference type="ChEBI" id="CHEBI:29999"/>
        <dbReference type="ChEBI" id="CHEBI:30616"/>
        <dbReference type="ChEBI" id="CHEBI:83421"/>
        <dbReference type="ChEBI" id="CHEBI:456216"/>
        <dbReference type="EC" id="2.7.11.31"/>
    </reaction>
</comment>
<comment type="cofactor">
    <cofactor evidence="38">
        <name>Mg(2+)</name>
        <dbReference type="ChEBI" id="CHEBI:18420"/>
    </cofactor>
</comment>
<comment type="activity regulation">
    <text evidence="9 13 23 24">Activated by phosphorylation on Thr-172 (PubMed:15980064). Binding of AMP to non-catalytic gamma subunit (PRKAG1, PRKAG2 or PRKAG3) results in allosteric activation, inducing phosphorylation on Thr-172 (PubMed:15980064). AMP-binding to gamma subunit also sustains activity by preventing dephosphorylation of Thr-172 (PubMed:15980064). ADP also stimulates Thr-172 phosphorylation, without stimulating already phosphorylated AMPK (PubMed:15980064). ATP promotes dephosphorylation of Thr-172, rendering the enzyme inactive (PubMed:15980064). Under physiological conditions AMPK mainly exists in its inactive form in complex with ATP, which is much more abundant than AMP. AMPK is activated by antihyperglycemic drug metformin, a drug prescribed to patients with type 2 diabetes: in vivo, metformin seems to mainly inhibit liver gluconeogenesis. However, metformin can be used to activate AMPK in muscle and other cells in culture or ex vivo (PubMed:11602624). Selectively inhibited by compound C (6-[4-(2-Piperidin-1-yl-ethoxy)-phenyl)]-3-pyridin-4-yl-pyyrazolo[1,5-a] pyrimidine. Activated by resveratrol, a natural polyphenol present in red wine, and S17834, a synthetic polyphenol. Salicylate/aspirin directly activates kinase activity, primarily by inhibiting Thr-172 dephosphorylation.</text>
</comment>
<comment type="subunit">
    <text evidence="23 26 27 31">AMPK is a heterotrimer of an alpha catalytic subunit (PRKAA1 or PRKAA2), a beta (PRKAB1 or PRKAB2) and a gamma non-catalytic subunits (PRKAG1, PRKAG2 or PRKAG3) (PubMed:21543851). Interacts with FNIP1 and FNIP2. Associates with internalized insulin receptor/INSR complexes on Golgi/endosomal membranes; PRKAA2/AMPK2 together with ATIC and HACD3/PTPLAD1 is proposed to be part of a signaling network regulating INSR autophosphorylation and endocytosis (PubMed:25687571). Interacts with ARF6 (PubMed:36017701). The phosphorylated form at Thr-172 mediated by CamKK2 interacts with ACSS2 (PubMed:28552616).</text>
</comment>
<comment type="interaction">
    <interactant intactId="EBI-1383852">
        <id>P54646</id>
    </interactant>
    <interactant intactId="EBI-11743294">
        <id>Q8IZP0-5</id>
        <label>ABI1</label>
    </interactant>
    <organismsDiffer>false</organismsDiffer>
    <experiments>3</experiments>
</comment>
<comment type="interaction">
    <interactant intactId="EBI-1383852">
        <id>P54646</id>
    </interactant>
    <interactant intactId="EBI-743598">
        <id>Q9NYB9</id>
        <label>ABI2</label>
    </interactant>
    <organismsDiffer>false</organismsDiffer>
    <experiments>5</experiments>
</comment>
<comment type="interaction">
    <interactant intactId="EBI-1383852">
        <id>P54646</id>
    </interactant>
    <interactant intactId="EBI-11096309">
        <id>Q9NYB9-2</id>
        <label>ABI2</label>
    </interactant>
    <organismsDiffer>false</organismsDiffer>
    <experiments>3</experiments>
</comment>
<comment type="interaction">
    <interactant intactId="EBI-1383852">
        <id>P54646</id>
    </interactant>
    <interactant intactId="EBI-745226">
        <id>Q13155</id>
        <label>AIMP2</label>
    </interactant>
    <organismsDiffer>false</organismsDiffer>
    <experiments>3</experiments>
</comment>
<comment type="interaction">
    <interactant intactId="EBI-1383852">
        <id>P54646</id>
    </interactant>
    <interactant intactId="EBI-357530">
        <id>Q9ULX6</id>
        <label>AKAP8L</label>
    </interactant>
    <organismsDiffer>false</organismsDiffer>
    <experiments>3</experiments>
</comment>
<comment type="interaction">
    <interactant intactId="EBI-1383852">
        <id>P54646</id>
    </interactant>
    <interactant intactId="EBI-17286414">
        <id>A2BDD9</id>
        <label>AMOT</label>
    </interactant>
    <organismsDiffer>false</organismsDiffer>
    <experiments>3</experiments>
</comment>
<comment type="interaction">
    <interactant intactId="EBI-1383852">
        <id>P54646</id>
    </interactant>
    <interactant intactId="EBI-746752">
        <id>Q9Y2J4</id>
        <label>AMOTL2</label>
    </interactant>
    <organismsDiffer>false</organismsDiffer>
    <experiments>3</experiments>
</comment>
<comment type="interaction">
    <interactant intactId="EBI-1383852">
        <id>P54646</id>
    </interactant>
    <interactant intactId="EBI-12224467">
        <id>Q9NYG5-2</id>
        <label>ANAPC11</label>
    </interactant>
    <organismsDiffer>false</organismsDiffer>
    <experiments>3</experiments>
</comment>
<comment type="interaction">
    <interactant intactId="EBI-1383852">
        <id>P54646</id>
    </interactant>
    <interactant intactId="EBI-743771">
        <id>Q92624</id>
        <label>APPBP2</label>
    </interactant>
    <organismsDiffer>false</organismsDiffer>
    <experiments>3</experiments>
</comment>
<comment type="interaction">
    <interactant intactId="EBI-1383852">
        <id>P54646</id>
    </interactant>
    <interactant intactId="EBI-2875665">
        <id>Q96B67</id>
        <label>ARRDC3</label>
    </interactant>
    <organismsDiffer>false</organismsDiffer>
    <experiments>3</experiments>
</comment>
<comment type="interaction">
    <interactant intactId="EBI-1383852">
        <id>P54646</id>
    </interactant>
    <interactant intactId="EBI-8640233">
        <id>Q5T686</id>
        <label>AVPI1</label>
    </interactant>
    <organismsDiffer>false</organismsDiffer>
    <experiments>3</experiments>
</comment>
<comment type="interaction">
    <interactant intactId="EBI-1383852">
        <id>P54646</id>
    </interactant>
    <interactant intactId="EBI-749920">
        <id>Q9P1Z2</id>
        <label>CALCOCO1</label>
    </interactant>
    <organismsDiffer>false</organismsDiffer>
    <experiments>3</experiments>
</comment>
<comment type="interaction">
    <interactant intactId="EBI-1383852">
        <id>P54646</id>
    </interactant>
    <interactant intactId="EBI-739580">
        <id>Q13137</id>
        <label>CALCOCO2</label>
    </interactant>
    <organismsDiffer>false</organismsDiffer>
    <experiments>3</experiments>
</comment>
<comment type="interaction">
    <interactant intactId="EBI-1383852">
        <id>P54646</id>
    </interactant>
    <interactant intactId="EBI-2548868">
        <id>P0C7W6</id>
        <label>CCDC172</label>
    </interactant>
    <organismsDiffer>false</organismsDiffer>
    <experiments>3</experiments>
</comment>
<comment type="interaction">
    <interactant intactId="EBI-1383852">
        <id>P54646</id>
    </interactant>
    <interactant intactId="EBI-745269">
        <id>Q9NPC3</id>
        <label>CCNB1IP1</label>
    </interactant>
    <organismsDiffer>false</organismsDiffer>
    <experiments>4</experiments>
</comment>
<comment type="interaction">
    <interactant intactId="EBI-1383852">
        <id>P54646</id>
    </interactant>
    <interactant intactId="EBI-11027409">
        <id>Q00587-2</id>
        <label>CDC42EP1</label>
    </interactant>
    <organismsDiffer>false</organismsDiffer>
    <experiments>3</experiments>
</comment>
<comment type="interaction">
    <interactant intactId="EBI-1383852">
        <id>P54646</id>
    </interactant>
    <interactant intactId="EBI-1181367">
        <id>Q01850</id>
        <label>CDR2</label>
    </interactant>
    <organismsDiffer>false</organismsDiffer>
    <experiments>3</experiments>
</comment>
<comment type="interaction">
    <interactant intactId="EBI-1383852">
        <id>P54646</id>
    </interactant>
    <interactant intactId="EBI-10181162">
        <id>O14627</id>
        <label>CDX4</label>
    </interactant>
    <organismsDiffer>false</organismsDiffer>
    <experiments>3</experiments>
</comment>
<comment type="interaction">
    <interactant intactId="EBI-1383852">
        <id>P54646</id>
    </interactant>
    <interactant intactId="EBI-11523759">
        <id>Q8N684-3</id>
        <label>CPSF7</label>
    </interactant>
    <organismsDiffer>false</organismsDiffer>
    <experiments>3</experiments>
</comment>
<comment type="interaction">
    <interactant intactId="EBI-1383852">
        <id>P54646</id>
    </interactant>
    <interactant intactId="EBI-12265122">
        <id>O75638-2</id>
        <label>CTAG2</label>
    </interactant>
    <organismsDiffer>false</organismsDiffer>
    <experiments>3</experiments>
</comment>
<comment type="interaction">
    <interactant intactId="EBI-1383852">
        <id>P54646</id>
    </interactant>
    <interactant intactId="EBI-3867333">
        <id>A8MQ03</id>
        <label>CYSRT1</label>
    </interactant>
    <organismsDiffer>false</organismsDiffer>
    <experiments>3</experiments>
</comment>
<comment type="interaction">
    <interactant intactId="EBI-1383852">
        <id>P54646</id>
    </interactant>
    <interactant intactId="EBI-10239299">
        <id>Q9NQM4</id>
        <label>DNAAF6</label>
    </interactant>
    <organismsDiffer>false</organismsDiffer>
    <experiments>3</experiments>
</comment>
<comment type="interaction">
    <interactant intactId="EBI-1383852">
        <id>P54646</id>
    </interactant>
    <interactant intactId="EBI-346547">
        <id>P50570</id>
        <label>DNM2</label>
    </interactant>
    <organismsDiffer>false</organismsDiffer>
    <experiments>3</experiments>
</comment>
<comment type="interaction">
    <interactant intactId="EBI-1383852">
        <id>P54646</id>
    </interactant>
    <interactant intactId="EBI-739789">
        <id>Q92997</id>
        <label>DVL3</label>
    </interactant>
    <organismsDiffer>false</organismsDiffer>
    <experiments>3</experiments>
</comment>
<comment type="interaction">
    <interactant intactId="EBI-1383852">
        <id>P54646</id>
    </interactant>
    <interactant intactId="EBI-11748557">
        <id>Q9Y6C2-2</id>
        <label>EMILIN1</label>
    </interactant>
    <organismsDiffer>false</organismsDiffer>
    <experiments>3</experiments>
</comment>
<comment type="interaction">
    <interactant intactId="EBI-1383852">
        <id>P54646</id>
    </interactant>
    <interactant intactId="EBI-12135243">
        <id>O95208-2</id>
        <label>EPN2</label>
    </interactant>
    <organismsDiffer>false</organismsDiffer>
    <experiments>3</experiments>
</comment>
<comment type="interaction">
    <interactant intactId="EBI-1383852">
        <id>P54646</id>
    </interactant>
    <interactant intactId="EBI-10242151">
        <id>Q53EP0-3</id>
        <label>FNDC3B</label>
    </interactant>
    <organismsDiffer>false</organismsDiffer>
    <experiments>3</experiments>
</comment>
<comment type="interaction">
    <interactant intactId="EBI-1383852">
        <id>P54646</id>
    </interactant>
    <interactant intactId="EBI-10198738">
        <id>Q6FG41</id>
        <label>FOS</label>
    </interactant>
    <organismsDiffer>false</organismsDiffer>
    <experiments>3</experiments>
</comment>
<comment type="interaction">
    <interactant intactId="EBI-1383852">
        <id>P54646</id>
    </interactant>
    <interactant intactId="EBI-947774">
        <id>O75420</id>
        <label>GIGYF1</label>
    </interactant>
    <organismsDiffer>false</organismsDiffer>
    <experiments>3</experiments>
</comment>
<comment type="interaction">
    <interactant intactId="EBI-1383852">
        <id>P54646</id>
    </interactant>
    <interactant intactId="EBI-308084">
        <id>P08151</id>
        <label>GLI1</label>
    </interactant>
    <organismsDiffer>false</organismsDiffer>
    <experiments>3</experiments>
</comment>
<comment type="interaction">
    <interactant intactId="EBI-1383852">
        <id>P54646</id>
    </interactant>
    <interactant intactId="EBI-618309">
        <id>Q08379</id>
        <label>GOLGA2</label>
    </interactant>
    <organismsDiffer>false</organismsDiffer>
    <experiments>3</experiments>
</comment>
<comment type="interaction">
    <interactant intactId="EBI-1383852">
        <id>P54646</id>
    </interactant>
    <interactant intactId="EBI-11163335">
        <id>Q9NYA3</id>
        <label>GOLGA6A</label>
    </interactant>
    <organismsDiffer>false</organismsDiffer>
    <experiments>3</experiments>
</comment>
<comment type="interaction">
    <interactant intactId="EBI-1383852">
        <id>P54646</id>
    </interactant>
    <interactant intactId="EBI-740418">
        <id>O75791</id>
        <label>GRAP2</label>
    </interactant>
    <organismsDiffer>false</organismsDiffer>
    <experiments>3</experiments>
</comment>
<comment type="interaction">
    <interactant intactId="EBI-1383852">
        <id>P54646</id>
    </interactant>
    <interactant intactId="EBI-747754">
        <id>P28799</id>
        <label>GRN</label>
    </interactant>
    <organismsDiffer>false</organismsDiffer>
    <experiments>3</experiments>
</comment>
<comment type="interaction">
    <interactant intactId="EBI-1383852">
        <id>P54646</id>
    </interactant>
    <interactant intactId="EBI-2549423">
        <id>Q6NT76</id>
        <label>HMBOX1</label>
    </interactant>
    <organismsDiffer>false</organismsDiffer>
    <experiments>3</experiments>
</comment>
<comment type="interaction">
    <interactant intactId="EBI-1383852">
        <id>P54646</id>
    </interactant>
    <interactant intactId="EBI-10172004">
        <id>Q8IX15-3</id>
        <label>HOMEZ</label>
    </interactant>
    <organismsDiffer>false</organismsDiffer>
    <experiments>3</experiments>
</comment>
<comment type="interaction">
    <interactant intactId="EBI-1383852">
        <id>P54646</id>
    </interactant>
    <interactant intactId="EBI-11522367">
        <id>Q13422-7</id>
        <label>IKZF1</label>
    </interactant>
    <organismsDiffer>false</organismsDiffer>
    <experiments>3</experiments>
</comment>
<comment type="interaction">
    <interactant intactId="EBI-1383852">
        <id>P54646</id>
    </interactant>
    <interactant intactId="EBI-747204">
        <id>Q9UKT9</id>
        <label>IKZF3</label>
    </interactant>
    <organismsDiffer>false</organismsDiffer>
    <experiments>3</experiments>
</comment>
<comment type="interaction">
    <interactant intactId="EBI-1383852">
        <id>P54646</id>
    </interactant>
    <interactant intactId="EBI-9027502">
        <id>Q719H9</id>
        <label>KCTD1</label>
    </interactant>
    <organismsDiffer>false</organismsDiffer>
    <experiments>3</experiments>
</comment>
<comment type="interaction">
    <interactant intactId="EBI-1383852">
        <id>P54646</id>
    </interactant>
    <interactant intactId="EBI-4397613">
        <id>Q7L273</id>
        <label>KCTD9</label>
    </interactant>
    <organismsDiffer>false</organismsDiffer>
    <experiments>3</experiments>
</comment>
<comment type="interaction">
    <interactant intactId="EBI-1383852">
        <id>P54646</id>
    </interactant>
    <interactant intactId="EBI-3437878">
        <id>Q86T90</id>
        <label>KIAA1328</label>
    </interactant>
    <organismsDiffer>false</organismsDiffer>
    <experiments>3</experiments>
</comment>
<comment type="interaction">
    <interactant intactId="EBI-1383852">
        <id>P54646</id>
    </interactant>
    <interactant intactId="EBI-10988217">
        <id>Q96L93-6</id>
        <label>KIF16B</label>
    </interactant>
    <organismsDiffer>false</organismsDiffer>
    <experiments>3</experiments>
</comment>
<comment type="interaction">
    <interactant intactId="EBI-1383852">
        <id>P54646</id>
    </interactant>
    <interactant intactId="EBI-10213781">
        <id>Q5T7B8-2</id>
        <label>KIF24</label>
    </interactant>
    <organismsDiffer>false</organismsDiffer>
    <experiments>3</experiments>
</comment>
<comment type="interaction">
    <interactant intactId="EBI-1383852">
        <id>P54646</id>
    </interactant>
    <interactant intactId="EBI-2125614">
        <id>Q9BVG8</id>
        <label>KIFC3</label>
    </interactant>
    <organismsDiffer>false</organismsDiffer>
    <experiments>4</experiments>
</comment>
<comment type="interaction">
    <interactant intactId="EBI-1383852">
        <id>P54646</id>
    </interactant>
    <interactant intactId="EBI-356410">
        <id>P08779</id>
        <label>KRT16</label>
    </interactant>
    <organismsDiffer>false</organismsDiffer>
    <experiments>3</experiments>
</comment>
<comment type="interaction">
    <interactant intactId="EBI-1383852">
        <id>P54646</id>
    </interactant>
    <interactant intactId="EBI-948001">
        <id>Q15323</id>
        <label>KRT31</label>
    </interactant>
    <organismsDiffer>false</organismsDiffer>
    <experiments>3</experiments>
</comment>
<comment type="interaction">
    <interactant intactId="EBI-1383852">
        <id>P54646</id>
    </interactant>
    <interactant intactId="EBI-11749135">
        <id>Q8IUG1</id>
        <label>KRTAP1-3</label>
    </interactant>
    <organismsDiffer>false</organismsDiffer>
    <experiments>3</experiments>
</comment>
<comment type="interaction">
    <interactant intactId="EBI-1383852">
        <id>P54646</id>
    </interactant>
    <interactant intactId="EBI-10172052">
        <id>P60411</id>
        <label>KRTAP10-9</label>
    </interactant>
    <organismsDiffer>false</organismsDiffer>
    <experiments>3</experiments>
</comment>
<comment type="interaction">
    <interactant intactId="EBI-1383852">
        <id>P54646</id>
    </interactant>
    <interactant intactId="EBI-2686809">
        <id>Q96JM7</id>
        <label>L3MBTL3</label>
    </interactant>
    <organismsDiffer>false</organismsDiffer>
    <experiments>3</experiments>
</comment>
<comment type="interaction">
    <interactant intactId="EBI-1383852">
        <id>P54646</id>
    </interactant>
    <interactant intactId="EBI-11985629">
        <id>Q96JM7-2</id>
        <label>L3MBTL3</label>
    </interactant>
    <organismsDiffer>false</organismsDiffer>
    <experiments>3</experiments>
</comment>
<comment type="interaction">
    <interactant intactId="EBI-1383852">
        <id>P54646</id>
    </interactant>
    <interactant intactId="EBI-11911016">
        <id>P80188</id>
        <label>LCN2</label>
    </interactant>
    <organismsDiffer>false</organismsDiffer>
    <experiments>3</experiments>
</comment>
<comment type="interaction">
    <interactant intactId="EBI-1383852">
        <id>P54646</id>
    </interactant>
    <interactant intactId="EBI-741037">
        <id>Q9BRK4</id>
        <label>LZTS2</label>
    </interactant>
    <organismsDiffer>false</organismsDiffer>
    <experiments>3</experiments>
</comment>
<comment type="interaction">
    <interactant intactId="EBI-1383852">
        <id>P54646</id>
    </interactant>
    <interactant intactId="EBI-2340269">
        <id>Q13064</id>
        <label>MKRN3</label>
    </interactant>
    <organismsDiffer>false</organismsDiffer>
    <experiments>3</experiments>
</comment>
<comment type="interaction">
    <interactant intactId="EBI-1383852">
        <id>P54646</id>
    </interactant>
    <interactant intactId="EBI-9675802">
        <id>Q6PF18</id>
        <label>MORN3</label>
    </interactant>
    <organismsDiffer>false</organismsDiffer>
    <experiments>3</experiments>
</comment>
<comment type="interaction">
    <interactant intactId="EBI-1383852">
        <id>P54646</id>
    </interactant>
    <interactant intactId="EBI-995714">
        <id>Q9Y605</id>
        <label>MRFAP1</label>
    </interactant>
    <organismsDiffer>false</organismsDiffer>
    <experiments>3</experiments>
</comment>
<comment type="interaction">
    <interactant intactId="EBI-1383852">
        <id>P54646</id>
    </interactant>
    <interactant intactId="EBI-11522433">
        <id>Q5JR59-3</id>
        <label>MTUS2</label>
    </interactant>
    <organismsDiffer>false</organismsDiffer>
    <experiments>4</experiments>
</comment>
<comment type="interaction">
    <interactant intactId="EBI-1383852">
        <id>P54646</id>
    </interactant>
    <interactant intactId="EBI-18936665">
        <id>P12524-2</id>
        <label>MYCL</label>
    </interactant>
    <organismsDiffer>false</organismsDiffer>
    <experiments>3</experiments>
</comment>
<comment type="interaction">
    <interactant intactId="EBI-1383852">
        <id>P54646</id>
    </interactant>
    <interactant intactId="EBI-8641936">
        <id>Q15742</id>
        <label>NAB2</label>
    </interactant>
    <organismsDiffer>false</organismsDiffer>
    <experiments>3</experiments>
</comment>
<comment type="interaction">
    <interactant intactId="EBI-1383852">
        <id>P54646</id>
    </interactant>
    <interactant intactId="EBI-10172876">
        <id>Q7Z6G3-2</id>
        <label>NECAB2</label>
    </interactant>
    <organismsDiffer>false</organismsDiffer>
    <experiments>3</experiments>
</comment>
<comment type="interaction">
    <interactant intactId="EBI-1383852">
        <id>P54646</id>
    </interactant>
    <interactant intactId="EBI-10203843">
        <id>Q15233-2</id>
        <label>NONO</label>
    </interactant>
    <organismsDiffer>false</organismsDiffer>
    <experiments>3</experiments>
</comment>
<comment type="interaction">
    <interactant intactId="EBI-1383852">
        <id>P54646</id>
    </interactant>
    <interactant intactId="EBI-945833">
        <id>Q7Z3S9</id>
        <label>NOTCH2NLA</label>
    </interactant>
    <organismsDiffer>false</organismsDiffer>
    <experiments>3</experiments>
</comment>
<comment type="interaction">
    <interactant intactId="EBI-1383852">
        <id>P54646</id>
    </interactant>
    <interactant intactId="EBI-2362014">
        <id>Q96F24</id>
        <label>NRBF2</label>
    </interactant>
    <organismsDiffer>false</organismsDiffer>
    <experiments>3</experiments>
</comment>
<comment type="interaction">
    <interactant intactId="EBI-1383852">
        <id>P54646</id>
    </interactant>
    <interactant intactId="EBI-10178410">
        <id>Q86Y26</id>
        <label>NUTM1</label>
    </interactant>
    <organismsDiffer>false</organismsDiffer>
    <experiments>3</experiments>
</comment>
<comment type="interaction">
    <interactant intactId="EBI-1383852">
        <id>P54646</id>
    </interactant>
    <interactant intactId="EBI-12014286">
        <id>Q494U1-3</id>
        <label>PLEKHN1</label>
    </interactant>
    <organismsDiffer>false</organismsDiffer>
    <experiments>3</experiments>
</comment>
<comment type="interaction">
    <interactant intactId="EBI-1383852">
        <id>P54646</id>
    </interactant>
    <interactant intactId="EBI-11320284">
        <id>Q9NQX0</id>
        <label>PRDM6</label>
    </interactant>
    <organismsDiffer>false</organismsDiffer>
    <experiments>3</experiments>
</comment>
<comment type="interaction">
    <interactant intactId="EBI-1383852">
        <id>P54646</id>
    </interactant>
    <interactant intactId="EBI-719769">
        <id>Q9Y478</id>
        <label>PRKAB1</label>
    </interactant>
    <organismsDiffer>false</organismsDiffer>
    <experiments>10</experiments>
</comment>
<comment type="interaction">
    <interactant intactId="EBI-1383852">
        <id>P54646</id>
    </interactant>
    <interactant intactId="EBI-1053424">
        <id>O43741</id>
        <label>PRKAB2</label>
    </interactant>
    <organismsDiffer>false</organismsDiffer>
    <experiments>17</experiments>
</comment>
<comment type="interaction">
    <interactant intactId="EBI-1383852">
        <id>P54646</id>
    </interactant>
    <interactant intactId="EBI-1181439">
        <id>P54619</id>
        <label>PRKAG1</label>
    </interactant>
    <organismsDiffer>false</organismsDiffer>
    <experiments>14</experiments>
</comment>
<comment type="interaction">
    <interactant intactId="EBI-1383852">
        <id>P54646</id>
    </interactant>
    <interactant intactId="EBI-2805516">
        <id>P31321</id>
        <label>PRKAR1B</label>
    </interactant>
    <organismsDiffer>false</organismsDiffer>
    <experiments>3</experiments>
</comment>
<comment type="interaction">
    <interactant intactId="EBI-1383852">
        <id>P54646</id>
    </interactant>
    <interactant intactId="EBI-752074">
        <id>P41219</id>
        <label>PRPH</label>
    </interactant>
    <organismsDiffer>false</organismsDiffer>
    <experiments>3</experiments>
</comment>
<comment type="interaction">
    <interactant intactId="EBI-1383852">
        <id>P54646</id>
    </interactant>
    <interactant intactId="EBI-3437896">
        <id>Q86YV0</id>
        <label>RASAL3</label>
    </interactant>
    <organismsDiffer>false</organismsDiffer>
    <experiments>3</experiments>
</comment>
<comment type="interaction">
    <interactant intactId="EBI-1383852">
        <id>P54646</id>
    </interactant>
    <interactant intactId="EBI-740322">
        <id>Q93062</id>
        <label>RBPMS</label>
    </interactant>
    <organismsDiffer>false</organismsDiffer>
    <experiments>3</experiments>
</comment>
<comment type="interaction">
    <interactant intactId="EBI-1383852">
        <id>P54646</id>
    </interactant>
    <interactant intactId="EBI-10829018">
        <id>Q04864-2</id>
        <label>REL</label>
    </interactant>
    <organismsDiffer>false</organismsDiffer>
    <experiments>4</experiments>
</comment>
<comment type="interaction">
    <interactant intactId="EBI-1383852">
        <id>P54646</id>
    </interactant>
    <interactant intactId="EBI-746118">
        <id>Q8HWS3</id>
        <label>RFX6</label>
    </interactant>
    <organismsDiffer>false</organismsDiffer>
    <experiments>3</experiments>
</comment>
<comment type="interaction">
    <interactant intactId="EBI-1383852">
        <id>P54646</id>
    </interactant>
    <interactant intactId="EBI-396669">
        <id>Q9Y3C5</id>
        <label>RNF11</label>
    </interactant>
    <organismsDiffer>false</organismsDiffer>
    <experiments>3</experiments>
</comment>
<comment type="interaction">
    <interactant intactId="EBI-1383852">
        <id>P54646</id>
    </interactant>
    <interactant intactId="EBI-12000762">
        <id>Q7Z5V6-2</id>
        <label>SAXO4</label>
    </interactant>
    <organismsDiffer>false</organismsDiffer>
    <experiments>3</experiments>
</comment>
<comment type="interaction">
    <interactant intactId="EBI-1383852">
        <id>P54646</id>
    </interactant>
    <interactant intactId="EBI-748621">
        <id>Q9UJW9</id>
        <label>SERTAD3</label>
    </interactant>
    <organismsDiffer>false</organismsDiffer>
    <experiments>3</experiments>
</comment>
<comment type="interaction">
    <interactant intactId="EBI-1383852">
        <id>P54646</id>
    </interactant>
    <interactant intactId="EBI-373226">
        <id>Q15477</id>
        <label>SKIC2</label>
    </interactant>
    <organismsDiffer>false</organismsDiffer>
    <experiments>3</experiments>
</comment>
<comment type="interaction">
    <interactant intactId="EBI-1383852">
        <id>P54646</id>
    </interactant>
    <interactant intactId="EBI-1222854">
        <id>Q9H6Q3</id>
        <label>SLA2</label>
    </interactant>
    <organismsDiffer>false</organismsDiffer>
    <experiments>3</experiments>
</comment>
<comment type="interaction">
    <interactant intactId="EBI-1383852">
        <id>P54646</id>
    </interactant>
    <interactant intactId="EBI-12288855">
        <id>Q5JUK2</id>
        <label>SOHLH1</label>
    </interactant>
    <organismsDiffer>false</organismsDiffer>
    <experiments>3</experiments>
</comment>
<comment type="interaction">
    <interactant intactId="EBI-1383852">
        <id>P54646</id>
    </interactant>
    <interactant intactId="EBI-3866665">
        <id>O43609</id>
        <label>SPRY1</label>
    </interactant>
    <organismsDiffer>false</organismsDiffer>
    <experiments>3</experiments>
</comment>
<comment type="interaction">
    <interactant intactId="EBI-1383852">
        <id>P54646</id>
    </interactant>
    <interactant intactId="EBI-948802">
        <id>Q6ZMT1</id>
        <label>STAC2</label>
    </interactant>
    <organismsDiffer>false</organismsDiffer>
    <experiments>3</experiments>
</comment>
<comment type="interaction">
    <interactant intactId="EBI-1383852">
        <id>P54646</id>
    </interactant>
    <interactant intactId="EBI-306838">
        <id>Q15831</id>
        <label>STK11</label>
    </interactant>
    <organismsDiffer>false</organismsDiffer>
    <experiments>3</experiments>
</comment>
<comment type="interaction">
    <interactant intactId="EBI-1383852">
        <id>P54646</id>
    </interactant>
    <interactant intactId="EBI-533224">
        <id>P15884</id>
        <label>TCF4</label>
    </interactant>
    <organismsDiffer>false</organismsDiffer>
    <experiments>3</experiments>
</comment>
<comment type="interaction">
    <interactant intactId="EBI-1383852">
        <id>P54646</id>
    </interactant>
    <interactant intactId="EBI-740711">
        <id>Q96CG3</id>
        <label>TIFA</label>
    </interactant>
    <organismsDiffer>false</organismsDiffer>
    <experiments>3</experiments>
</comment>
<comment type="interaction">
    <interactant intactId="EBI-1383852">
        <id>P54646</id>
    </interactant>
    <interactant intactId="EBI-717810">
        <id>Q08117</id>
        <label>TLE5</label>
    </interactant>
    <organismsDiffer>false</organismsDiffer>
    <experiments>3</experiments>
</comment>
<comment type="interaction">
    <interactant intactId="EBI-1383852">
        <id>P54646</id>
    </interactant>
    <interactant intactId="EBI-11741437">
        <id>Q08117-2</id>
        <label>TLE5</label>
    </interactant>
    <organismsDiffer>false</organismsDiffer>
    <experiments>3</experiments>
</comment>
<comment type="interaction">
    <interactant intactId="EBI-1383852">
        <id>P54646</id>
    </interactant>
    <interactant intactId="EBI-358993">
        <id>Q15645</id>
        <label>TRIP13</label>
    </interactant>
    <organismsDiffer>false</organismsDiffer>
    <experiments>3</experiments>
</comment>
<comment type="interaction">
    <interactant intactId="EBI-1383852">
        <id>P54646</id>
    </interactant>
    <interactant intactId="EBI-742327">
        <id>Q15654</id>
        <label>TRIP6</label>
    </interactant>
    <organismsDiffer>false</organismsDiffer>
    <experiments>3</experiments>
</comment>
<comment type="interaction">
    <interactant intactId="EBI-1383852">
        <id>P54646</id>
    </interactant>
    <interactant intactId="EBI-739485">
        <id>Q9Y3Q8</id>
        <label>TSC22D4</label>
    </interactant>
    <organismsDiffer>false</organismsDiffer>
    <experiments>3</experiments>
</comment>
<comment type="interaction">
    <interactant intactId="EBI-1383852">
        <id>P54646</id>
    </interactant>
    <interactant intactId="EBI-908831">
        <id>O75385</id>
        <label>ULK1</label>
    </interactant>
    <organismsDiffer>false</organismsDiffer>
    <experiments>2</experiments>
</comment>
<comment type="interaction">
    <interactant intactId="EBI-1383852">
        <id>P54646</id>
    </interactant>
    <interactant intactId="EBI-11523636">
        <id>Q9Y6N9-4</id>
        <label>USH1C</label>
    </interactant>
    <organismsDiffer>false</organismsDiffer>
    <experiments>3</experiments>
</comment>
<comment type="interaction">
    <interactant intactId="EBI-1383852">
        <id>P54646</id>
    </interactant>
    <interactant intactId="EBI-8601749">
        <id>Q495M9</id>
        <label>USH1G</label>
    </interactant>
    <organismsDiffer>false</organismsDiffer>
    <experiments>3</experiments>
</comment>
<comment type="interaction">
    <interactant intactId="EBI-1383852">
        <id>P54646</id>
    </interactant>
    <interactant intactId="EBI-739895">
        <id>Q8N6Y0</id>
        <label>USHBP1</label>
    </interactant>
    <organismsDiffer>false</organismsDiffer>
    <experiments>3</experiments>
</comment>
<comment type="interaction">
    <interactant intactId="EBI-1383852">
        <id>P54646</id>
    </interactant>
    <interactant intactId="EBI-12146727">
        <id>Q9UK41-2</id>
        <label>VPS28</label>
    </interactant>
    <organismsDiffer>false</organismsDiffer>
    <experiments>3</experiments>
</comment>
<comment type="interaction">
    <interactant intactId="EBI-1383852">
        <id>P54646</id>
    </interactant>
    <interactant intactId="EBI-4400866">
        <id>Q9H9H4</id>
        <label>VPS37B</label>
    </interactant>
    <organismsDiffer>false</organismsDiffer>
    <experiments>3</experiments>
</comment>
<comment type="interaction">
    <interactant intactId="EBI-1383852">
        <id>P54646</id>
    </interactant>
    <interactant intactId="EBI-2799833">
        <id>Q8N1B4</id>
        <label>VPS52</label>
    </interactant>
    <organismsDiffer>false</organismsDiffer>
    <experiments>3</experiments>
</comment>
<comment type="interaction">
    <interactant intactId="EBI-1383852">
        <id>P54646</id>
    </interactant>
    <interactant intactId="EBI-720609">
        <id>O76024</id>
        <label>WFS1</label>
    </interactant>
    <organismsDiffer>false</organismsDiffer>
    <experiments>3</experiments>
</comment>
<comment type="interaction">
    <interactant intactId="EBI-1383852">
        <id>P54646</id>
    </interactant>
    <interactant intactId="EBI-743923">
        <id>O00308</id>
        <label>WWP2</label>
    </interactant>
    <organismsDiffer>false</organismsDiffer>
    <experiments>3</experiments>
</comment>
<comment type="interaction">
    <interactant intactId="EBI-1383852">
        <id>P54646</id>
    </interactant>
    <interactant intactId="EBI-356498">
        <id>P62258</id>
        <label>YWHAE</label>
    </interactant>
    <organismsDiffer>false</organismsDiffer>
    <experiments>2</experiments>
</comment>
<comment type="interaction">
    <interactant intactId="EBI-1383852">
        <id>P54646</id>
    </interactant>
    <interactant intactId="EBI-742740">
        <id>Q96BR9</id>
        <label>ZBTB8A</label>
    </interactant>
    <organismsDiffer>false</organismsDiffer>
    <experiments>3</experiments>
</comment>
<comment type="interaction">
    <interactant intactId="EBI-1383852">
        <id>P54646</id>
    </interactant>
    <interactant intactId="EBI-12030590">
        <id>Q9H0C1</id>
        <label>ZMYND12</label>
    </interactant>
    <organismsDiffer>false</organismsDiffer>
    <experiments>3</experiments>
</comment>
<comment type="interaction">
    <interactant intactId="EBI-1383852">
        <id>P54646</id>
    </interactant>
    <interactant intactId="EBI-1640204">
        <id>Q9UDV6</id>
        <label>ZNF212</label>
    </interactant>
    <organismsDiffer>false</organismsDiffer>
    <experiments>3</experiments>
</comment>
<comment type="interaction">
    <interactant intactId="EBI-1383852">
        <id>P54646</id>
    </interactant>
    <interactant intactId="EBI-10213894">
        <id>Q8NF99</id>
        <label>ZNF397</label>
    </interactant>
    <organismsDiffer>false</organismsDiffer>
    <experiments>3</experiments>
</comment>
<comment type="interaction">
    <interactant intactId="EBI-1383852">
        <id>P54646</id>
    </interactant>
    <interactant intactId="EBI-5667532">
        <id>Q3MJ62</id>
        <label>ZSCAN23</label>
    </interactant>
    <organismsDiffer>false</organismsDiffer>
    <experiments>3</experiments>
</comment>
<comment type="interaction">
    <interactant intactId="EBI-1383852">
        <id>P54646</id>
    </interactant>
    <interactant intactId="EBI-8627450">
        <id>Q9WTK7</id>
        <label>Stk11</label>
    </interactant>
    <organismsDiffer>true</organismsDiffer>
    <experiments>2</experiments>
</comment>
<comment type="subcellular location">
    <subcellularLocation>
        <location evidence="3">Cytoplasm</location>
    </subcellularLocation>
    <subcellularLocation>
        <location evidence="12">Nucleus</location>
    </subcellularLocation>
    <text evidence="12">In response to stress, recruited by p53/TP53 to specific promoters.</text>
</comment>
<comment type="domain">
    <text evidence="2">The AIS (autoinhibitory sequence) region shows some sequence similarity with the ubiquitin-associated domains and represses kinase activity.</text>
</comment>
<comment type="PTM">
    <text evidence="3">Ubiquitinated.</text>
</comment>
<comment type="PTM">
    <text evidence="13 22">Phosphorylated at Thr-172 by STK11/LKB1 in complex with STE20-related adapter-alpha (STRADA) pseudo kinase and CAB39. Also phosphorylated at Thr-172 by CAMKK2; triggered by a rise in intracellular calcium ions, without detectable changes in the AMP/ATP ratio. CAMKK1 can also phosphorylate Thr-172, but at much lower level. Dephosphorylated by protein phosphatase 2A and 2C (PP2A and PP2C). Phosphorylated by ULK1; leading to negatively regulate AMPK activity and suggesting the existence of a regulatory feedback loop between ULK1 and AMPK. Dephosphorylated by PPM1A and PPM1B at Thr-172 (mediated by STK11/LKB1).</text>
</comment>
<comment type="similarity">
    <text evidence="38">Belongs to the protein kinase superfamily. CAMK Ser/Thr protein kinase family. SNF1 subfamily.</text>
</comment>
<reference key="1">
    <citation type="journal article" date="1994" name="Gene">
        <title>Characterization and chromosomal localization of the human homologue of a rat AMP-activated protein kinase-encoding gene: a major regulator of lipid metabolism in mammals.</title>
        <authorList>
            <person name="Aguan K."/>
            <person name="Scott J."/>
            <person name="See C.G."/>
            <person name="Sarkar N.H."/>
        </authorList>
    </citation>
    <scope>NUCLEOTIDE SEQUENCE [MRNA]</scope>
    <scope>FUNCTION</scope>
    <source>
        <tissue>Heart</tissue>
    </source>
</reference>
<reference key="2">
    <citation type="journal article" date="1994" name="FEBS Lett.">
        <title>Molecular cloning, expression and chromosomal localisation of human AMP-activated protein kinase.</title>
        <authorList>
            <person name="Beri R.K."/>
            <person name="Marley A.E."/>
            <person name="See C.G."/>
            <person name="Sopwith W.F."/>
            <person name="Aguan K."/>
            <person name="Carling D."/>
            <person name="Scott J."/>
            <person name="Carey F."/>
        </authorList>
    </citation>
    <scope>NUCLEOTIDE SEQUENCE [MRNA]</scope>
    <source>
        <tissue>Skeletal muscle</tissue>
    </source>
</reference>
<reference key="3">
    <citation type="journal article" date="2006" name="Nature">
        <title>The DNA sequence and biological annotation of human chromosome 1.</title>
        <authorList>
            <person name="Gregory S.G."/>
            <person name="Barlow K.F."/>
            <person name="McLay K.E."/>
            <person name="Kaul R."/>
            <person name="Swarbreck D."/>
            <person name="Dunham A."/>
            <person name="Scott C.E."/>
            <person name="Howe K.L."/>
            <person name="Woodfine K."/>
            <person name="Spencer C.C.A."/>
            <person name="Jones M.C."/>
            <person name="Gillson C."/>
            <person name="Searle S."/>
            <person name="Zhou Y."/>
            <person name="Kokocinski F."/>
            <person name="McDonald L."/>
            <person name="Evans R."/>
            <person name="Phillips K."/>
            <person name="Atkinson A."/>
            <person name="Cooper R."/>
            <person name="Jones C."/>
            <person name="Hall R.E."/>
            <person name="Andrews T.D."/>
            <person name="Lloyd C."/>
            <person name="Ainscough R."/>
            <person name="Almeida J.P."/>
            <person name="Ambrose K.D."/>
            <person name="Anderson F."/>
            <person name="Andrew R.W."/>
            <person name="Ashwell R.I.S."/>
            <person name="Aubin K."/>
            <person name="Babbage A.K."/>
            <person name="Bagguley C.L."/>
            <person name="Bailey J."/>
            <person name="Beasley H."/>
            <person name="Bethel G."/>
            <person name="Bird C.P."/>
            <person name="Bray-Allen S."/>
            <person name="Brown J.Y."/>
            <person name="Brown A.J."/>
            <person name="Buckley D."/>
            <person name="Burton J."/>
            <person name="Bye J."/>
            <person name="Carder C."/>
            <person name="Chapman J.C."/>
            <person name="Clark S.Y."/>
            <person name="Clarke G."/>
            <person name="Clee C."/>
            <person name="Cobley V."/>
            <person name="Collier R.E."/>
            <person name="Corby N."/>
            <person name="Coville G.J."/>
            <person name="Davies J."/>
            <person name="Deadman R."/>
            <person name="Dunn M."/>
            <person name="Earthrowl M."/>
            <person name="Ellington A.G."/>
            <person name="Errington H."/>
            <person name="Frankish A."/>
            <person name="Frankland J."/>
            <person name="French L."/>
            <person name="Garner P."/>
            <person name="Garnett J."/>
            <person name="Gay L."/>
            <person name="Ghori M.R.J."/>
            <person name="Gibson R."/>
            <person name="Gilby L.M."/>
            <person name="Gillett W."/>
            <person name="Glithero R.J."/>
            <person name="Grafham D.V."/>
            <person name="Griffiths C."/>
            <person name="Griffiths-Jones S."/>
            <person name="Grocock R."/>
            <person name="Hammond S."/>
            <person name="Harrison E.S.I."/>
            <person name="Hart E."/>
            <person name="Haugen E."/>
            <person name="Heath P.D."/>
            <person name="Holmes S."/>
            <person name="Holt K."/>
            <person name="Howden P.J."/>
            <person name="Hunt A.R."/>
            <person name="Hunt S.E."/>
            <person name="Hunter G."/>
            <person name="Isherwood J."/>
            <person name="James R."/>
            <person name="Johnson C."/>
            <person name="Johnson D."/>
            <person name="Joy A."/>
            <person name="Kay M."/>
            <person name="Kershaw J.K."/>
            <person name="Kibukawa M."/>
            <person name="Kimberley A.M."/>
            <person name="King A."/>
            <person name="Knights A.J."/>
            <person name="Lad H."/>
            <person name="Laird G."/>
            <person name="Lawlor S."/>
            <person name="Leongamornlert D.A."/>
            <person name="Lloyd D.M."/>
            <person name="Loveland J."/>
            <person name="Lovell J."/>
            <person name="Lush M.J."/>
            <person name="Lyne R."/>
            <person name="Martin S."/>
            <person name="Mashreghi-Mohammadi M."/>
            <person name="Matthews L."/>
            <person name="Matthews N.S.W."/>
            <person name="McLaren S."/>
            <person name="Milne S."/>
            <person name="Mistry S."/>
            <person name="Moore M.J.F."/>
            <person name="Nickerson T."/>
            <person name="O'Dell C.N."/>
            <person name="Oliver K."/>
            <person name="Palmeiri A."/>
            <person name="Palmer S.A."/>
            <person name="Parker A."/>
            <person name="Patel D."/>
            <person name="Pearce A.V."/>
            <person name="Peck A.I."/>
            <person name="Pelan S."/>
            <person name="Phelps K."/>
            <person name="Phillimore B.J."/>
            <person name="Plumb R."/>
            <person name="Rajan J."/>
            <person name="Raymond C."/>
            <person name="Rouse G."/>
            <person name="Saenphimmachak C."/>
            <person name="Sehra H.K."/>
            <person name="Sheridan E."/>
            <person name="Shownkeen R."/>
            <person name="Sims S."/>
            <person name="Skuce C.D."/>
            <person name="Smith M."/>
            <person name="Steward C."/>
            <person name="Subramanian S."/>
            <person name="Sycamore N."/>
            <person name="Tracey A."/>
            <person name="Tromans A."/>
            <person name="Van Helmond Z."/>
            <person name="Wall M."/>
            <person name="Wallis J.M."/>
            <person name="White S."/>
            <person name="Whitehead S.L."/>
            <person name="Wilkinson J.E."/>
            <person name="Willey D.L."/>
            <person name="Williams H."/>
            <person name="Wilming L."/>
            <person name="Wray P.W."/>
            <person name="Wu Z."/>
            <person name="Coulson A."/>
            <person name="Vaudin M."/>
            <person name="Sulston J.E."/>
            <person name="Durbin R.M."/>
            <person name="Hubbard T."/>
            <person name="Wooster R."/>
            <person name="Dunham I."/>
            <person name="Carter N.P."/>
            <person name="McVean G."/>
            <person name="Ross M.T."/>
            <person name="Harrow J."/>
            <person name="Olson M.V."/>
            <person name="Beck S."/>
            <person name="Rogers J."/>
            <person name="Bentley D.R."/>
        </authorList>
    </citation>
    <scope>NUCLEOTIDE SEQUENCE [LARGE SCALE GENOMIC DNA]</scope>
</reference>
<reference key="4">
    <citation type="journal article" date="2004" name="Genome Res.">
        <title>The status, quality, and expansion of the NIH full-length cDNA project: the Mammalian Gene Collection (MGC).</title>
        <authorList>
            <consortium name="The MGC Project Team"/>
        </authorList>
    </citation>
    <scope>NUCLEOTIDE SEQUENCE [LARGE SCALE MRNA]</scope>
</reference>
<reference key="5">
    <citation type="journal article" date="2001" name="Biochem. Biophys. Res. Commun.">
        <title>Cell cycle regulation via p53 phosphorylation by a 5'-AMP activated protein kinase activator, 5-aminoimidazole-4-carboxamide-1-beta-D-ribofuranoside, in a human hepatocellular carcinoma cell line.</title>
        <authorList>
            <person name="Imamura K."/>
            <person name="Ogura T."/>
            <person name="Kishimoto A."/>
            <person name="Kaminishi M."/>
            <person name="Esumi H."/>
        </authorList>
    </citation>
    <scope>FUNCTION</scope>
</reference>
<reference key="6">
    <citation type="journal article" date="2001" name="J. Biol. Chem.">
        <title>Regulation of transcription by AMP-activated protein kinase: phosphorylation of p300 blocks its interaction with nuclear receptors.</title>
        <authorList>
            <person name="Yang W."/>
            <person name="Hong Y.H."/>
            <person name="Shen X.Q."/>
            <person name="Frankowski C."/>
            <person name="Camp H.S."/>
            <person name="Leff T."/>
        </authorList>
    </citation>
    <scope>FUNCTION IN PHOSPHORYLATION OF EP300</scope>
</reference>
<reference key="7">
    <citation type="journal article" date="2001" name="J. Clin. Invest.">
        <title>Role of AMP-activated protein kinase in mechanism of metformin action.</title>
        <authorList>
            <person name="Zhou G."/>
            <person name="Myers R."/>
            <person name="Li Y."/>
            <person name="Chen Y."/>
            <person name="Shen X."/>
            <person name="Fenyk-Melody J."/>
            <person name="Wu M."/>
            <person name="Ventre J."/>
            <person name="Doebber T."/>
            <person name="Fujii N."/>
            <person name="Musi N."/>
            <person name="Hirshman M.F."/>
            <person name="Goodyear L.J."/>
            <person name="Moller D.E."/>
        </authorList>
    </citation>
    <scope>ACTIVITY REGULATION</scope>
</reference>
<reference key="8">
    <citation type="journal article" date="2003" name="Am. J. Physiol.">
        <title>Physiological modulation of CFTR activity by AMP-activated protein kinase in polarized T84 cells.</title>
        <authorList>
            <person name="Hallows K.R."/>
            <person name="Kobinger G.P."/>
            <person name="Wilson J.M."/>
            <person name="Witters L.A."/>
            <person name="Foskett J.K."/>
        </authorList>
    </citation>
    <scope>FUNCTION IN PHOSPHORYLATION OF CFTR</scope>
</reference>
<reference key="9">
    <citation type="journal article" date="2003" name="Cell">
        <title>TSC2 mediates cellular energy response to control cell growth and survival.</title>
        <authorList>
            <person name="Inoki K."/>
            <person name="Zhu T."/>
            <person name="Guan K.L."/>
        </authorList>
    </citation>
    <scope>FUNCTION IN PHOSPHORYLATION OF TSC2</scope>
</reference>
<reference key="10">
    <citation type="journal article" date="2005" name="J. Biol. Chem.">
        <title>The Ca2+/calmodulin-dependent protein kinase kinases are AMP-activated protein kinase kinases.</title>
        <authorList>
            <person name="Hurley R.L."/>
            <person name="Anderson K.A."/>
            <person name="Franzone J.M."/>
            <person name="Kemp B.E."/>
            <person name="Means A.R."/>
            <person name="Witters L.A."/>
        </authorList>
    </citation>
    <scope>PHOSPHORYLATION AT THR-172</scope>
    <scope>ACTIVITY REGULATION</scope>
</reference>
<reference key="11">
    <citation type="journal article" date="2005" name="Mol. Cell">
        <title>AMP-activated protein kinase induces a p53-dependent metabolic checkpoint.</title>
        <authorList>
            <person name="Jones R.G."/>
            <person name="Plas D.R."/>
            <person name="Kubek S."/>
            <person name="Buzzai M."/>
            <person name="Mu J."/>
            <person name="Xu Y."/>
            <person name="Birnbaum M.J."/>
            <person name="Thompson C.B."/>
        </authorList>
    </citation>
    <scope>FUNCTION</scope>
    <scope>SUBCELLULAR LOCATION</scope>
</reference>
<reference key="12">
    <citation type="journal article" date="2007" name="J. Biol. Chem.">
        <title>The energy sensor AMP-activated protein kinase directly regulates the mammalian FOXO3 transcription factor.</title>
        <authorList>
            <person name="Greer E.L."/>
            <person name="Oskoui P.R."/>
            <person name="Banko M.R."/>
            <person name="Maniar J.M."/>
            <person name="Gygi M.P."/>
            <person name="Gygi S.P."/>
            <person name="Brunet A."/>
        </authorList>
    </citation>
    <scope>FUNCTION IN PHOSPHORYLATION OF FOXO3</scope>
</reference>
<reference key="13">
    <citation type="journal article" date="2007" name="Nature">
        <title>Energy-dependent regulation of cell structure by AMP-activated protein kinase.</title>
        <authorList>
            <person name="Lee J.H."/>
            <person name="Koh H."/>
            <person name="Kim M."/>
            <person name="Kim Y."/>
            <person name="Lee S.Y."/>
            <person name="Karess R.E."/>
            <person name="Lee S.H."/>
            <person name="Shong M."/>
            <person name="Kim J.M."/>
            <person name="Kim J."/>
            <person name="Chung J."/>
        </authorList>
    </citation>
    <scope>FUNCTION IN CELL POLARITY</scope>
</reference>
<reference key="14">
    <citation type="journal article" date="2008" name="Diabetes">
        <title>AMP-activated protein kinase regulates GLUT4 transcription by phosphorylating histone deacetylase 5.</title>
        <authorList>
            <person name="McGee S.L."/>
            <person name="van Denderen B.J."/>
            <person name="Howlett K.F."/>
            <person name="Mollica J."/>
            <person name="Schertzer J.D."/>
            <person name="Kemp B.E."/>
            <person name="Hargreaves M."/>
        </authorList>
    </citation>
    <scope>FUNCTION IN PHOSPHORYLATION OF HDAC5</scope>
</reference>
<reference key="15">
    <citation type="journal article" date="2008" name="Mol. Cell">
        <title>Kinase-selective enrichment enables quantitative phosphoproteomics of the kinome across the cell cycle.</title>
        <authorList>
            <person name="Daub H."/>
            <person name="Olsen J.V."/>
            <person name="Bairlein M."/>
            <person name="Gnad F."/>
            <person name="Oppermann F.S."/>
            <person name="Korner R."/>
            <person name="Greff Z."/>
            <person name="Keri G."/>
            <person name="Stemmann O."/>
            <person name="Mann M."/>
        </authorList>
    </citation>
    <scope>PHOSPHORYLATION [LARGE SCALE ANALYSIS] AT SER-377</scope>
    <scope>IDENTIFICATION BY MASS SPECTROMETRY [LARGE SCALE ANALYSIS]</scope>
    <source>
        <tissue>Cervix carcinoma</tissue>
    </source>
</reference>
<reference key="16">
    <citation type="journal article" date="2008" name="Proc. Natl. Acad. Sci. U.S.A.">
        <title>A quantitative atlas of mitotic phosphorylation.</title>
        <authorList>
            <person name="Dephoure N."/>
            <person name="Zhou C."/>
            <person name="Villen J."/>
            <person name="Beausoleil S.A."/>
            <person name="Bakalarski C.E."/>
            <person name="Elledge S.J."/>
            <person name="Gygi S.P."/>
        </authorList>
    </citation>
    <scope>IDENTIFICATION BY MASS SPECTROMETRY [LARGE SCALE ANALYSIS]</scope>
    <source>
        <tissue>Cervix carcinoma</tissue>
    </source>
</reference>
<reference key="17">
    <citation type="journal article" date="2009" name="Mol. Cell. Proteomics">
        <title>Large-scale proteomics analysis of the human kinome.</title>
        <authorList>
            <person name="Oppermann F.S."/>
            <person name="Gnad F."/>
            <person name="Olsen J.V."/>
            <person name="Hornberger R."/>
            <person name="Greff Z."/>
            <person name="Keri G."/>
            <person name="Mann M."/>
            <person name="Daub H."/>
        </authorList>
    </citation>
    <scope>PHOSPHORYLATION [LARGE SCALE ANALYSIS] AT SER-377</scope>
    <scope>IDENTIFICATION BY MASS SPECTROMETRY [LARGE SCALE ANALYSIS]</scope>
</reference>
<reference key="18">
    <citation type="journal article" date="2010" name="Biochem. Soc. Trans.">
        <title>Cell-wide analysis of secretory granule dynamics in three dimensions in living pancreatic beta-cells: evidence against a role for AMPK-dependent phosphorylation of KLC1 at Ser517/Ser520 in glucose-stimulated insulin granule movement.</title>
        <authorList>
            <person name="McDonald A."/>
            <person name="Fogarty S."/>
            <person name="Leclerc I."/>
            <person name="Hill E.V."/>
            <person name="Hardie D.G."/>
            <person name="Rutter G.A."/>
        </authorList>
    </citation>
    <scope>FUNCTION IN PHOSPHORYLATION OF KLC1</scope>
</reference>
<reference key="19">
    <citation type="journal article" date="2010" name="Proc. Natl. Acad. Sci. U.S.A.">
        <title>ATM signals to TSC2 in the cytoplasm to regulate mTORC1 in response to ROS.</title>
        <authorList>
            <person name="Alexander A."/>
            <person name="Cai S.L."/>
            <person name="Kim J."/>
            <person name="Nanez A."/>
            <person name="Sahin M."/>
            <person name="MacLean K.H."/>
            <person name="Inoki K."/>
            <person name="Guan K.L."/>
            <person name="Shen J."/>
            <person name="Person M.D."/>
            <person name="Kusewitt D."/>
            <person name="Mills G.B."/>
            <person name="Kastan M.B."/>
            <person name="Walker C.L."/>
        </authorList>
    </citation>
    <scope>FUNCTION</scope>
</reference>
<reference key="20">
    <citation type="journal article" date="2011" name="Autophagy">
        <title>Ulk1-mediated phosphorylation of AMPK constitutes a negative regulatory feedback loop.</title>
        <authorList>
            <person name="Loffler A.S."/>
            <person name="Alers S."/>
            <person name="Dieterle A.M."/>
            <person name="Keppeler H."/>
            <person name="Franz-Wachtel M."/>
            <person name="Kundu M."/>
            <person name="Campbell D.G."/>
            <person name="Wesselborg S."/>
            <person name="Alessi D.R."/>
            <person name="Stork B."/>
        </authorList>
    </citation>
    <scope>PHOSPHORYLATION BY ULK1</scope>
</reference>
<reference key="21">
    <citation type="journal article" date="2011" name="BMC Syst. Biol.">
        <title>Initial characterization of the human central proteome.</title>
        <authorList>
            <person name="Burkard T.R."/>
            <person name="Planyavsky M."/>
            <person name="Kaupe I."/>
            <person name="Breitwieser F.P."/>
            <person name="Buerckstuemmer T."/>
            <person name="Bennett K.L."/>
            <person name="Superti-Furga G."/>
            <person name="Colinge J."/>
        </authorList>
    </citation>
    <scope>IDENTIFICATION BY MASS SPECTROMETRY [LARGE SCALE ANALYSIS]</scope>
</reference>
<reference key="22">
    <citation type="journal article" date="2011" name="Science">
        <title>Phosphorylation of ULK1 (hATG1) by AMP-activated protein kinase connects energy sensing to mitophagy.</title>
        <authorList>
            <person name="Egan D.F."/>
            <person name="Shackelford D.B."/>
            <person name="Mihaylova M.M."/>
            <person name="Gelino S."/>
            <person name="Kohnz R.A."/>
            <person name="Mair W."/>
            <person name="Vasquez D.S."/>
            <person name="Joshi A."/>
            <person name="Gwinn D.M."/>
            <person name="Taylor R."/>
            <person name="Asara J.M."/>
            <person name="Fitzpatrick J."/>
            <person name="Dillin A."/>
            <person name="Viollet B."/>
            <person name="Kundu M."/>
            <person name="Hansen M."/>
            <person name="Shaw R.J."/>
        </authorList>
    </citation>
    <scope>FUNCTION IN PHOSPHORYLATION OF ULK1</scope>
</reference>
<reference key="23">
    <citation type="journal article" date="2007" name="Circ. Res.">
        <title>AMP-activated protein kinase in metabolic control and insulin signaling.</title>
        <authorList>
            <person name="Towler M.C."/>
            <person name="Hardie D.G."/>
        </authorList>
    </citation>
    <scope>REVIEW ON FUNCTION</scope>
</reference>
<reference key="24">
    <citation type="journal article" date="2007" name="Nat. Rev. Mol. Cell Biol.">
        <title>AMP-activated/SNF1 protein kinases: conserved guardians of cellular energy.</title>
        <authorList>
            <person name="Hardie D.G."/>
        </authorList>
    </citation>
    <scope>REVIEW ON FUNCTION</scope>
</reference>
<reference key="25">
    <citation type="journal article" date="2012" name="Science">
        <title>The ancient drug salicylate directly activates AMP-activated protein kinase.</title>
        <authorList>
            <person name="Hawley S.A."/>
            <person name="Fullerton M.D."/>
            <person name="Ross F.A."/>
            <person name="Schertzer J.D."/>
            <person name="Chevtzoff C."/>
            <person name="Walker K.J."/>
            <person name="Peggie M.W."/>
            <person name="Zibrova D."/>
            <person name="Green K.A."/>
            <person name="Mustard K.J."/>
            <person name="Kemp B.E."/>
            <person name="Sakamoto K."/>
            <person name="Steinberg G.R."/>
            <person name="Hardie D.G."/>
        </authorList>
    </citation>
    <scope>ACTIVITY REGULATION BY SALICYLATE</scope>
</reference>
<reference key="26">
    <citation type="journal article" date="2013" name="Biochem. J.">
        <title>N-Myristoylation is essential for protein phosphatases PPM1A and PPM1B to dephosphorylate their physiological substrates in cells.</title>
        <authorList>
            <person name="Chida T."/>
            <person name="Ando M."/>
            <person name="Matsuki T."/>
            <person name="Masu Y."/>
            <person name="Nagaura Y."/>
            <person name="Takano-Yamamoto T."/>
            <person name="Tamura S."/>
            <person name="Kobayashi T."/>
        </authorList>
    </citation>
    <scope>DEPHOSPHORYLATION AT THR-172</scope>
</reference>
<reference key="27">
    <citation type="journal article" date="2013" name="J. Proteome Res.">
        <title>Toward a comprehensive characterization of a human cancer cell phosphoproteome.</title>
        <authorList>
            <person name="Zhou H."/>
            <person name="Di Palma S."/>
            <person name="Preisinger C."/>
            <person name="Peng M."/>
            <person name="Polat A.N."/>
            <person name="Heck A.J."/>
            <person name="Mohammed S."/>
        </authorList>
    </citation>
    <scope>PHOSPHORYLATION [LARGE SCALE ANALYSIS] AT SER-377</scope>
    <scope>IDENTIFICATION BY MASS SPECTROMETRY [LARGE SCALE ANALYSIS]</scope>
    <source>
        <tissue>Cervix carcinoma</tissue>
    </source>
</reference>
<reference key="28">
    <citation type="journal article" date="2014" name="Cell Rep.">
        <title>A mitochondrial RNAi screen defines cellular bioenergetic determinants and identifies an adenylate kinase as a key regulator of ATP levels.</title>
        <authorList>
            <person name="Lanning N.J."/>
            <person name="Looyenga B.D."/>
            <person name="Kauffman A.L."/>
            <person name="Niemi N.M."/>
            <person name="Sudderth J."/>
            <person name="DeBerardinis R.J."/>
            <person name="MacKeigan J.P."/>
        </authorList>
    </citation>
    <scope>PHOSPHORYLATION AT THR-172</scope>
</reference>
<reference key="29">
    <citation type="journal article" date="2015" name="Mol. Cell. Proteomics">
        <title>The last enzyme of the de novo purine synthesis pathway 5-aminoimidazole-4-carboxamide ribonucleotide formyltransferase/IMP cyclohydrolase (ATIC) plays a central role in insulin signaling and the Golgi/endosomes protein network.</title>
        <authorList>
            <person name="Boutchueng-Djidjou M."/>
            <person name="Collard-Simard G."/>
            <person name="Fortier S."/>
            <person name="Hebert S.S."/>
            <person name="Kelly I."/>
            <person name="Landry C.R."/>
            <person name="Faure R.L."/>
        </authorList>
    </citation>
    <scope>FUNCTION</scope>
    <scope>SUBUNIT</scope>
</reference>
<reference key="30">
    <citation type="journal article" date="2017" name="Mol. Cell">
        <title>Nucleus-Translocated ACSS2 Promotes Gene Transcription for Lysosomal Biogenesis and Autophagy.</title>
        <authorList>
            <person name="Li X."/>
            <person name="Yu W."/>
            <person name="Qian X."/>
            <person name="Xia Y."/>
            <person name="Zheng Y."/>
            <person name="Lee J.H."/>
            <person name="Li W."/>
            <person name="Lyu J."/>
            <person name="Rao G."/>
            <person name="Zhang X."/>
            <person name="Qian C.N."/>
            <person name="Rozen S.G."/>
            <person name="Jiang T."/>
            <person name="Lu Z."/>
        </authorList>
    </citation>
    <scope>FUNCTION</scope>
    <scope>CATALYTIC ACTIVITY</scope>
    <scope>PHOSPHORYLATION AT THR-172</scope>
    <scope>INTERACTION WITH ACSS2</scope>
    <scope>MUTAGENESIS OF THR-172</scope>
</reference>
<reference key="31">
    <citation type="journal article" date="2017" name="Nat. Commun.">
        <title>WIPI3 and WIPI4 beta-propellers are scaffolds for LKB1-AMPK-TSC signalling circuits in the control of autophagy.</title>
        <authorList>
            <person name="Bakula D."/>
            <person name="Mueller A.J."/>
            <person name="Zuleger T."/>
            <person name="Takacs Z."/>
            <person name="Franz-Wachtel M."/>
            <person name="Thost A.K."/>
            <person name="Brigger D."/>
            <person name="Tschan M.P."/>
            <person name="Frickey T."/>
            <person name="Robenek H."/>
            <person name="Macek B."/>
            <person name="Proikas-Cezanne T."/>
        </authorList>
    </citation>
    <scope>FUNCTION</scope>
</reference>
<reference key="32">
    <citation type="journal article" date="2020" name="Science">
        <title>An AMPK-caspase-6 axis controls liver damage in nonalcoholic steatohepatitis.</title>
        <authorList>
            <person name="Zhao P."/>
            <person name="Sun X."/>
            <person name="Chaggan C."/>
            <person name="Liao Z."/>
            <person name="In Wong K."/>
            <person name="He F."/>
            <person name="Singh S."/>
            <person name="Loomba R."/>
            <person name="Karin M."/>
            <person name="Witztum J.L."/>
            <person name="Saltiel A.R."/>
        </authorList>
    </citation>
    <scope>FUNCTION</scope>
    <scope>CATALYTIC ACTIVITY</scope>
</reference>
<reference key="33">
    <citation type="journal article" date="2021" name="Mol. Cell">
        <title>Choline kinase alpha 2 acts as a protein kinase to promote lipolysis of lipid droplets.</title>
        <authorList>
            <person name="Liu R."/>
            <person name="Lee J.H."/>
            <person name="Li J."/>
            <person name="Yu R."/>
            <person name="Tan L."/>
            <person name="Xia Y."/>
            <person name="Zheng Y."/>
            <person name="Bian X.L."/>
            <person name="Lorenzi P.L."/>
            <person name="Chen Q."/>
            <person name="Lu Z."/>
        </authorList>
    </citation>
    <scope>FUNCTION</scope>
</reference>
<reference key="34">
    <citation type="journal article" date="2023" name="Nat. Metab.">
        <title>AMPK-dependent phosphorylation of the GATOR2 component WDR24 suppresses glucose-mediated mTORC1 activation.</title>
        <authorList>
            <person name="Dai X."/>
            <person name="Jiang C."/>
            <person name="Jiang Q."/>
            <person name="Fang L."/>
            <person name="Yu H."/>
            <person name="Guo J."/>
            <person name="Yan P."/>
            <person name="Chi F."/>
            <person name="Zhang T."/>
            <person name="Inuzuka H."/>
            <person name="Asara J.M."/>
            <person name="Wang P."/>
            <person name="Guo J."/>
            <person name="Wei W."/>
        </authorList>
    </citation>
    <scope>FUNCTION</scope>
    <scope>CATALYTIC ACTIVITY</scope>
</reference>
<reference key="35">
    <citation type="journal article" date="2023" name="Science">
        <title>Induction of lysosomal and mitochondrial biogenesis by AMPK phosphorylation of FNIP1.</title>
        <authorList>
            <person name="Malik N."/>
            <person name="Ferreira B.I."/>
            <person name="Hollstein P.E."/>
            <person name="Curtis S.D."/>
            <person name="Trefts E."/>
            <person name="Weiser Novak S."/>
            <person name="Yu J."/>
            <person name="Gilson R."/>
            <person name="Hellberg K."/>
            <person name="Fang L."/>
            <person name="Sheridan A."/>
            <person name="Hah N."/>
            <person name="Shadel G.S."/>
            <person name="Manor U."/>
            <person name="Shaw R.J."/>
        </authorList>
    </citation>
    <scope>FUNCTION</scope>
    <scope>CATALYTIC ACTIVITY</scope>
</reference>
<reference key="36">
    <citation type="journal article" date="2022" name="J. Cell Sci.">
        <title>AMPK promotes Arf6 activation in a kinase-independent manner upon glucose starvation.</title>
        <authorList>
            <person name="Chen K.J."/>
            <person name="Hsu J.W."/>
            <person name="Lee F.S."/>
        </authorList>
    </citation>
    <scope>FUNCTION</scope>
    <scope>INTERACTION WITH ARF6</scope>
    <scope>MUTAGENESIS OF LYS-45 AND THR-172</scope>
</reference>
<reference key="37">
    <citation type="journal article" date="2022" name="Sci. Adv.">
        <title>AMPK-dependent phosphorylation of MTFR1L regulates mitochondrial morphology.</title>
        <authorList>
            <person name="Tilokani L."/>
            <person name="Russell F.M."/>
            <person name="Hamilton S."/>
            <person name="Virga D.M."/>
            <person name="Segawa M."/>
            <person name="Paupe V."/>
            <person name="Gruszczyk A.V."/>
            <person name="Protasoni M."/>
            <person name="Tabara L.C."/>
            <person name="Johnson M."/>
            <person name="Anand H."/>
            <person name="Murphy M.P."/>
            <person name="Hardie D.G."/>
            <person name="Polleux F."/>
            <person name="Prudent J."/>
        </authorList>
    </citation>
    <scope>FUNCTION</scope>
</reference>
<reference key="38">
    <citation type="journal article" date="2010" name="Acta Crystallogr. F">
        <title>A conserved mechanism of autoinhibition for the AMPK kinase domain: ATP-binding site and catalytic loop refolding as a means of regulation.</title>
        <authorList>
            <person name="Littler D.R."/>
            <person name="Walker J.R."/>
            <person name="Davis T."/>
            <person name="Wybenga-Groot L.E."/>
            <person name="Finerty P.J. Jr."/>
            <person name="Newman E."/>
            <person name="Mackenzie F."/>
            <person name="Dhe-Paganon S."/>
        </authorList>
    </citation>
    <scope>X-RAY CRYSTALLOGRAPHY (1.85 ANGSTROMS) OF 6-279</scope>
</reference>
<reference key="39">
    <citation type="journal article" date="2011" name="Acta Crystallogr. D">
        <title>Structural basis for compound C inhibition of the human AMP-activated protein kinase alpha2 subunit kinase domain.</title>
        <authorList>
            <person name="Handa N."/>
            <person name="Takagi T."/>
            <person name="Saijo S."/>
            <person name="Kishishita S."/>
            <person name="Takaya D."/>
            <person name="Toyama M."/>
            <person name="Terada T."/>
            <person name="Shirouzu M."/>
            <person name="Suzuki A."/>
            <person name="Lee S."/>
            <person name="Yamauchi T."/>
            <person name="Okada-Iwabu M."/>
            <person name="Iwabu M."/>
            <person name="Kadowaki T."/>
            <person name="Minokoshi Y."/>
            <person name="Yokoyama S."/>
        </authorList>
    </citation>
    <scope>X-RAY CRYSTALLOGRAPHY (2.08 ANGSTROMS) OF 6-279 OF MUTANT THR-172 IN COMPLEX WITH COMPOUND C</scope>
    <scope>ACTIVITY REGULATION</scope>
    <scope>MUTAGENESIS OF THR-172</scope>
</reference>
<reference key="40">
    <citation type="journal article" date="2006" name="Science">
        <title>The consensus coding sequences of human breast and colorectal cancers.</title>
        <authorList>
            <person name="Sjoeblom T."/>
            <person name="Jones S."/>
            <person name="Wood L.D."/>
            <person name="Parsons D.W."/>
            <person name="Lin J."/>
            <person name="Barber T.D."/>
            <person name="Mandelker D."/>
            <person name="Leary R.J."/>
            <person name="Ptak J."/>
            <person name="Silliman N."/>
            <person name="Szabo S."/>
            <person name="Buckhaults P."/>
            <person name="Farrell C."/>
            <person name="Meeh P."/>
            <person name="Markowitz S.D."/>
            <person name="Willis J."/>
            <person name="Dawson D."/>
            <person name="Willson J.K.V."/>
            <person name="Gazdar A.F."/>
            <person name="Hartigan J."/>
            <person name="Wu L."/>
            <person name="Liu C."/>
            <person name="Parmigiani G."/>
            <person name="Park B.H."/>
            <person name="Bachman K.E."/>
            <person name="Papadopoulos N."/>
            <person name="Vogelstein B."/>
            <person name="Kinzler K.W."/>
            <person name="Velculescu V.E."/>
        </authorList>
    </citation>
    <scope>VARIANTS [LARGE SCALE ANALYSIS] THR-371 AND GLY-523</scope>
</reference>
<reference key="41">
    <citation type="journal article" date="2007" name="Nature">
        <title>Patterns of somatic mutation in human cancer genomes.</title>
        <authorList>
            <person name="Greenman C."/>
            <person name="Stephens P."/>
            <person name="Smith R."/>
            <person name="Dalgliesh G.L."/>
            <person name="Hunter C."/>
            <person name="Bignell G."/>
            <person name="Davies H."/>
            <person name="Teague J."/>
            <person name="Butler A."/>
            <person name="Stevens C."/>
            <person name="Edkins S."/>
            <person name="O'Meara S."/>
            <person name="Vastrik I."/>
            <person name="Schmidt E.E."/>
            <person name="Avis T."/>
            <person name="Barthorpe S."/>
            <person name="Bhamra G."/>
            <person name="Buck G."/>
            <person name="Choudhury B."/>
            <person name="Clements J."/>
            <person name="Cole J."/>
            <person name="Dicks E."/>
            <person name="Forbes S."/>
            <person name="Gray K."/>
            <person name="Halliday K."/>
            <person name="Harrison R."/>
            <person name="Hills K."/>
            <person name="Hinton J."/>
            <person name="Jenkinson A."/>
            <person name="Jones D."/>
            <person name="Menzies A."/>
            <person name="Mironenko T."/>
            <person name="Perry J."/>
            <person name="Raine K."/>
            <person name="Richardson D."/>
            <person name="Shepherd R."/>
            <person name="Small A."/>
            <person name="Tofts C."/>
            <person name="Varian J."/>
            <person name="Webb T."/>
            <person name="West S."/>
            <person name="Widaa S."/>
            <person name="Yates A."/>
            <person name="Cahill D.P."/>
            <person name="Louis D.N."/>
            <person name="Goldstraw P."/>
            <person name="Nicholson A.G."/>
            <person name="Brasseur F."/>
            <person name="Looijenga L."/>
            <person name="Weber B.L."/>
            <person name="Chiew Y.-E."/>
            <person name="DeFazio A."/>
            <person name="Greaves M.F."/>
            <person name="Green A.R."/>
            <person name="Campbell P."/>
            <person name="Birney E."/>
            <person name="Easton D.F."/>
            <person name="Chenevix-Trench G."/>
            <person name="Tan M.-H."/>
            <person name="Khoo S.K."/>
            <person name="Teh B.T."/>
            <person name="Yuen S.T."/>
            <person name="Leung S.Y."/>
            <person name="Wooster R."/>
            <person name="Futreal P.A."/>
            <person name="Stratton M.R."/>
        </authorList>
    </citation>
    <scope>VARIANTS [LARGE SCALE ANALYSIS] THR-371 AND GLN-407</scope>
</reference>